<gene>
    <name evidence="43 53" type="primary">OGT</name>
</gene>
<organism>
    <name type="scientific">Homo sapiens</name>
    <name type="common">Human</name>
    <dbReference type="NCBI Taxonomy" id="9606"/>
    <lineage>
        <taxon>Eukaryota</taxon>
        <taxon>Metazoa</taxon>
        <taxon>Chordata</taxon>
        <taxon>Craniata</taxon>
        <taxon>Vertebrata</taxon>
        <taxon>Euteleostomi</taxon>
        <taxon>Mammalia</taxon>
        <taxon>Eutheria</taxon>
        <taxon>Euarchontoglires</taxon>
        <taxon>Primates</taxon>
        <taxon>Haplorrhini</taxon>
        <taxon>Catarrhini</taxon>
        <taxon>Hominidae</taxon>
        <taxon>Homo</taxon>
    </lineage>
</organism>
<feature type="initiator methionine" description="Removed" evidence="42 63 64">
    <location>
        <position position="1"/>
    </location>
</feature>
<feature type="chain" id="PRO_0000191772" description="UDP-N-acetylglucosamine--peptide N-acetylglucosaminyltransferase 110 kDa subunit">
    <location>
        <begin position="2"/>
        <end position="1046"/>
    </location>
</feature>
<feature type="repeat" description="TPR 1">
    <location>
        <begin position="21"/>
        <end position="54"/>
    </location>
</feature>
<feature type="repeat" description="TPR 2">
    <location>
        <begin position="89"/>
        <end position="122"/>
    </location>
</feature>
<feature type="repeat" description="TPR 3">
    <location>
        <begin position="123"/>
        <end position="156"/>
    </location>
</feature>
<feature type="repeat" description="TPR 4">
    <location>
        <begin position="157"/>
        <end position="190"/>
    </location>
</feature>
<feature type="repeat" description="TPR 5">
    <location>
        <begin position="191"/>
        <end position="224"/>
    </location>
</feature>
<feature type="repeat" description="TPR 6">
    <location>
        <begin position="225"/>
        <end position="258"/>
    </location>
</feature>
<feature type="repeat" description="TPR 7">
    <location>
        <begin position="259"/>
        <end position="292"/>
    </location>
</feature>
<feature type="repeat" description="TPR 8">
    <location>
        <begin position="293"/>
        <end position="326"/>
    </location>
</feature>
<feature type="repeat" description="TPR 9">
    <location>
        <begin position="327"/>
        <end position="360"/>
    </location>
</feature>
<feature type="repeat" description="TPR 10">
    <location>
        <begin position="361"/>
        <end position="394"/>
    </location>
</feature>
<feature type="repeat" description="TPR 11">
    <location>
        <begin position="395"/>
        <end position="428"/>
    </location>
</feature>
<feature type="repeat" description="TPR 12">
    <location>
        <begin position="429"/>
        <end position="462"/>
    </location>
</feature>
<feature type="repeat" description="TPR 13; truncated">
    <location>
        <begin position="463"/>
        <end position="473"/>
    </location>
</feature>
<feature type="region of interest" description="Required for phosphatidylinositol 3,4,5-triphosphate binding" evidence="1">
    <location>
        <begin position="991"/>
        <end position="1010"/>
    </location>
</feature>
<feature type="short sequence motif" description="DFP motif" evidence="30">
    <location>
        <begin position="464"/>
        <end position="466"/>
    </location>
</feature>
<feature type="short sequence motif" description="Nuclear localization signal" evidence="3">
    <location>
        <begin position="487"/>
        <end position="503"/>
    </location>
</feature>
<feature type="active site" description="Proton acceptor" evidence="50 52">
    <location>
        <position position="508"/>
    </location>
</feature>
<feature type="binding site" evidence="17 54">
    <location>
        <position position="849"/>
    </location>
    <ligand>
        <name>UDP</name>
        <dbReference type="ChEBI" id="CHEBI:58223"/>
    </ligand>
</feature>
<feature type="binding site" evidence="17 54">
    <location>
        <position position="852"/>
    </location>
    <ligand>
        <name>UDP</name>
        <dbReference type="ChEBI" id="CHEBI:58223"/>
    </ligand>
</feature>
<feature type="binding site" evidence="17 54">
    <location>
        <begin position="906"/>
        <end position="908"/>
    </location>
    <ligand>
        <name>UDP</name>
        <dbReference type="ChEBI" id="CHEBI:58223"/>
    </ligand>
</feature>
<feature type="binding site" evidence="17 54">
    <location>
        <begin position="911"/>
        <end position="914"/>
    </location>
    <ligand>
        <name>UDP</name>
        <dbReference type="ChEBI" id="CHEBI:58223"/>
    </ligand>
</feature>
<feature type="binding site" evidence="17 54">
    <location>
        <begin position="930"/>
        <end position="932"/>
    </location>
    <ligand>
        <name>UDP</name>
        <dbReference type="ChEBI" id="CHEBI:58223"/>
    </ligand>
</feature>
<feature type="binding site" evidence="17 54">
    <location>
        <position position="935"/>
    </location>
    <ligand>
        <name>UDP</name>
        <dbReference type="ChEBI" id="CHEBI:58223"/>
    </ligand>
</feature>
<feature type="modified residue" description="N-acetylalanine" evidence="42 63 64">
    <location>
        <position position="2"/>
    </location>
</feature>
<feature type="modified residue" description="Phosphoserine; by GSK3-beta; alternate" evidence="2">
    <location>
        <position position="3"/>
    </location>
</feature>
<feature type="modified residue" description="Phosphoserine; by GSK3-beta; alternate" evidence="2">
    <location>
        <position position="4"/>
    </location>
</feature>
<feature type="modified residue" description="Phosphoserine" evidence="65">
    <location>
        <position position="20"/>
    </location>
</feature>
<feature type="modified residue" description="Phosphothreonine; by AMPK" evidence="23 38">
    <location>
        <position position="454"/>
    </location>
</feature>
<feature type="modified residue" description="Phosphotyrosine" evidence="1">
    <location>
        <position position="989"/>
    </location>
</feature>
<feature type="glycosylation site" description="O-linked (GlcNAc) serine; alternate" evidence="2">
    <location>
        <position position="3"/>
    </location>
</feature>
<feature type="glycosylation site" description="O-linked (GlcNAc) serine; alternate" evidence="2">
    <location>
        <position position="4"/>
    </location>
</feature>
<feature type="glycosylation site" description="O-linked (GlcNAc) serine; by autocatalysis" evidence="30">
    <location>
        <position position="399"/>
    </location>
</feature>
<feature type="splice variant" id="VSP_040764" description="In isoform 4." evidence="45">
    <location>
        <begin position="1"/>
        <end position="381"/>
    </location>
</feature>
<feature type="splice variant" id="VSP_006553" description="In isoform 2." evidence="48">
    <original>MASSVGNVADSTEPTKRMLSFQGLAELAHREYQAGDFEAAERHCMQLWRQEPDNTGVLLLLSSIHFQCRRLDRSAHFSTLAIKQNPLLAEAYSNLGNVYKERGQLQEAIEHYRHALRLKPDFIDGYINLAAALVAAGDMEGAVQAYVSALQYNPDLYCVRSDLGNLLKALGRLEEA</original>
    <variation>MLQGHFWLVREGIMISPSSPPPPNLFFFPLQIFPFPFTSFPSHLLSLTPP</variation>
    <location>
        <begin position="1"/>
        <end position="176"/>
    </location>
</feature>
<feature type="splice variant" id="VSP_014164" description="In isoform 1." evidence="44 45">
    <location>
        <begin position="13"/>
        <end position="22"/>
    </location>
</feature>
<feature type="sequence variant" id="VAR_079254" description="In XLID106; decreased protein abundance; reduced protein stability; dbSNP:rs1131692155." evidence="31">
    <original>L</original>
    <variation>F</variation>
    <location>
        <position position="254"/>
    </location>
</feature>
<feature type="sequence variant" id="VAR_079183" description="In XLID106; decreased protein abundance; decreased enzyme activity; reduced protein stability; dbSNP:rs1114167891." evidence="32">
    <original>R</original>
    <variation>P</variation>
    <location>
        <position position="284"/>
    </location>
</feature>
<feature type="sequence variant" id="VAR_074019" description="In XLID106; uncertain significance; dbSNP:rs1602147851." evidence="26">
    <original>A</original>
    <variation>T</variation>
    <location>
        <position position="319"/>
    </location>
</feature>
<feature type="sequence variant" id="VAR_064736" description="Found in a renal cell carcinoma sample; somatic mutation.">
    <original>L</original>
    <variation>P</variation>
    <location>
        <position position="538"/>
    </location>
</feature>
<feature type="mutagenesis site" description="Abolished homooligomerization." evidence="30">
    <original>WLAI</original>
    <variation>ELAD</variation>
    <location>
        <begin position="208"/>
        <end position="211"/>
    </location>
</feature>
<feature type="mutagenesis site" description="Abolishes homodimerization of the TPR domain. Slightly reduced enzyme activity; when associated with D-211." evidence="5">
    <original>W</original>
    <variation>E</variation>
    <location>
        <position position="208"/>
    </location>
</feature>
<feature type="mutagenesis site" description="Abolishes homodimerization of the TPR domain. Slightly reduced enzyme activity; when associated with E-208." evidence="5">
    <original>I</original>
    <variation>D</variation>
    <location>
        <position position="211"/>
    </location>
</feature>
<feature type="mutagenesis site" description="Reduced autoglycosylation." evidence="30">
    <original>S</original>
    <variation>A</variation>
    <location>
        <position position="391"/>
    </location>
</feature>
<feature type="mutagenesis site" description="Reduced autoglycosylation." evidence="30">
    <original>T</original>
    <variation>V</variation>
    <location>
        <position position="393"/>
    </location>
</feature>
<feature type="mutagenesis site" description="Reduced autoglycosylation. Reduced localization to the nucleus." evidence="30">
    <original>S</original>
    <variation>A</variation>
    <location>
        <position position="399"/>
    </location>
</feature>
<feature type="mutagenesis site" description="Reduced autoglycosylation." evidence="30">
    <original>T</original>
    <variation>V</variation>
    <location>
        <position position="404"/>
    </location>
</feature>
<feature type="mutagenesis site" description="Abolished phosphorylation by AMPK. Does not affect ability to regulate mTORC1." evidence="23 38">
    <original>T</original>
    <variation>A</variation>
    <location>
        <position position="454"/>
    </location>
</feature>
<feature type="mutagenesis site" description="Affects substrate selectivity. Mimics phosphorylation; does not affect ability to regulate mTORC1." evidence="23 38">
    <original>T</original>
    <variation>E</variation>
    <location>
        <position position="454"/>
    </location>
</feature>
<feature type="mutagenesis site" description="Impaired localization to the nucleus." evidence="38">
    <original>DFP</original>
    <variation>AAA</variation>
    <location>
        <begin position="461"/>
        <end position="463"/>
    </location>
</feature>
<feature type="mutagenesis site" description="Loss of enzyme activity. Moderate increase in KMT2E ubiquitination. Moderate increase in KMT2E ubiquitination; when associated with A-508." evidence="13 28">
    <original>H</original>
    <variation>A</variation>
    <location>
        <position position="508"/>
    </location>
</feature>
<feature type="mutagenesis site" description="Reduces enzyme activity by about 95%. Moderate increase in KMT2E ubiquitination; when associated with A-508." evidence="13 28">
    <original>H</original>
    <variation>A</variation>
    <location>
        <position position="568"/>
    </location>
</feature>
<feature type="mutagenesis site" description="Reduces enzyme activity by over 90%." evidence="13">
    <original>H</original>
    <variation>A</variation>
    <location>
        <position position="911"/>
    </location>
</feature>
<feature type="sequence conflict" description="In Ref. 3; CAB62528." evidence="49" ref="3">
    <original>S</original>
    <variation>Q</variation>
    <location>
        <position position="308"/>
    </location>
</feature>
<feature type="sequence conflict" description="In Ref. 3; CAD97853." evidence="49" ref="3">
    <original>L</original>
    <variation>P</variation>
    <location>
        <position position="663"/>
    </location>
</feature>
<feature type="helix" evidence="66">
    <location>
        <begin position="27"/>
        <end position="34"/>
    </location>
</feature>
<feature type="helix" evidence="66">
    <location>
        <begin position="37"/>
        <end position="50"/>
    </location>
</feature>
<feature type="helix" evidence="71">
    <location>
        <begin position="60"/>
        <end position="67"/>
    </location>
</feature>
<feature type="helix" evidence="71">
    <location>
        <begin position="71"/>
        <end position="83"/>
    </location>
</feature>
<feature type="helix" evidence="71">
    <location>
        <begin position="89"/>
        <end position="101"/>
    </location>
</feature>
<feature type="helix" evidence="71">
    <location>
        <begin position="105"/>
        <end position="118"/>
    </location>
</feature>
<feature type="helix" evidence="71">
    <location>
        <begin position="123"/>
        <end position="135"/>
    </location>
</feature>
<feature type="helix" evidence="71">
    <location>
        <begin position="139"/>
        <end position="152"/>
    </location>
</feature>
<feature type="helix" evidence="71">
    <location>
        <begin position="157"/>
        <end position="169"/>
    </location>
</feature>
<feature type="helix" evidence="71">
    <location>
        <begin position="173"/>
        <end position="186"/>
    </location>
</feature>
<feature type="helix" evidence="71">
    <location>
        <begin position="191"/>
        <end position="203"/>
    </location>
</feature>
<feature type="helix" evidence="71">
    <location>
        <begin position="207"/>
        <end position="220"/>
    </location>
</feature>
<feature type="helix" evidence="71">
    <location>
        <begin position="225"/>
        <end position="237"/>
    </location>
</feature>
<feature type="helix" evidence="71">
    <location>
        <begin position="241"/>
        <end position="254"/>
    </location>
</feature>
<feature type="helix" evidence="71">
    <location>
        <begin position="259"/>
        <end position="271"/>
    </location>
</feature>
<feature type="helix" evidence="71">
    <location>
        <begin position="275"/>
        <end position="288"/>
    </location>
</feature>
<feature type="helix" evidence="71">
    <location>
        <begin position="293"/>
        <end position="306"/>
    </location>
</feature>
<feature type="helix" evidence="71">
    <location>
        <begin position="309"/>
        <end position="322"/>
    </location>
</feature>
<feature type="helix" evidence="70">
    <location>
        <begin position="325"/>
        <end position="340"/>
    </location>
</feature>
<feature type="helix" evidence="70">
    <location>
        <begin position="343"/>
        <end position="356"/>
    </location>
</feature>
<feature type="helix" evidence="70">
    <location>
        <begin position="361"/>
        <end position="373"/>
    </location>
</feature>
<feature type="helix" evidence="70">
    <location>
        <begin position="377"/>
        <end position="390"/>
    </location>
</feature>
<feature type="helix" evidence="70">
    <location>
        <begin position="395"/>
        <end position="407"/>
    </location>
</feature>
<feature type="helix" evidence="70">
    <location>
        <begin position="411"/>
        <end position="424"/>
    </location>
</feature>
<feature type="helix" evidence="70">
    <location>
        <begin position="429"/>
        <end position="442"/>
    </location>
</feature>
<feature type="helix" evidence="70">
    <location>
        <begin position="445"/>
        <end position="458"/>
    </location>
</feature>
<feature type="helix" evidence="70">
    <location>
        <begin position="463"/>
        <end position="475"/>
    </location>
</feature>
<feature type="helix" evidence="70">
    <location>
        <begin position="482"/>
        <end position="498"/>
    </location>
</feature>
<feature type="turn" evidence="70">
    <location>
        <begin position="507"/>
        <end position="509"/>
    </location>
</feature>
<feature type="helix" evidence="70">
    <location>
        <begin position="510"/>
        <end position="512"/>
    </location>
</feature>
<feature type="helix" evidence="70">
    <location>
        <begin position="517"/>
        <end position="535"/>
    </location>
</feature>
<feature type="helix" evidence="69">
    <location>
        <begin position="536"/>
        <end position="538"/>
    </location>
</feature>
<feature type="strand" evidence="70">
    <location>
        <begin position="547"/>
        <end position="549"/>
    </location>
</feature>
<feature type="turn" evidence="70">
    <location>
        <begin position="550"/>
        <end position="554"/>
    </location>
</feature>
<feature type="strand" evidence="70">
    <location>
        <begin position="556"/>
        <end position="563"/>
    </location>
</feature>
<feature type="strand" evidence="70">
    <location>
        <begin position="565"/>
        <end position="568"/>
    </location>
</feature>
<feature type="helix" evidence="70">
    <location>
        <begin position="569"/>
        <end position="574"/>
    </location>
</feature>
<feature type="helix" evidence="70">
    <location>
        <begin position="577"/>
        <end position="580"/>
    </location>
</feature>
<feature type="turn" evidence="70">
    <location>
        <begin position="583"/>
        <end position="585"/>
    </location>
</feature>
<feature type="strand" evidence="70">
    <location>
        <begin position="586"/>
        <end position="594"/>
    </location>
</feature>
<feature type="helix" evidence="70">
    <location>
        <begin position="600"/>
        <end position="608"/>
    </location>
</feature>
<feature type="strand" evidence="70">
    <location>
        <begin position="609"/>
        <end position="614"/>
    </location>
</feature>
<feature type="helix" evidence="70">
    <location>
        <begin position="615"/>
        <end position="617"/>
    </location>
</feature>
<feature type="helix" evidence="70">
    <location>
        <begin position="621"/>
        <end position="631"/>
    </location>
</feature>
<feature type="strand" evidence="70">
    <location>
        <begin position="634"/>
        <end position="639"/>
    </location>
</feature>
<feature type="strand" evidence="70">
    <location>
        <begin position="641"/>
        <end position="643"/>
    </location>
</feature>
<feature type="helix" evidence="70">
    <location>
        <begin position="649"/>
        <end position="652"/>
    </location>
</feature>
<feature type="strand" evidence="70">
    <location>
        <begin position="656"/>
        <end position="664"/>
    </location>
</feature>
<feature type="strand" evidence="75">
    <location>
        <begin position="671"/>
        <end position="673"/>
    </location>
</feature>
<feature type="strand" evidence="70">
    <location>
        <begin position="676"/>
        <end position="679"/>
    </location>
</feature>
<feature type="turn" evidence="70">
    <location>
        <begin position="681"/>
        <end position="683"/>
    </location>
</feature>
<feature type="helix" evidence="70">
    <location>
        <begin position="686"/>
        <end position="691"/>
    </location>
</feature>
<feature type="strand" evidence="70">
    <location>
        <begin position="693"/>
        <end position="698"/>
    </location>
</feature>
<feature type="helix" evidence="70">
    <location>
        <begin position="708"/>
        <end position="711"/>
    </location>
</feature>
<feature type="helix" evidence="70">
    <location>
        <begin position="713"/>
        <end position="715"/>
    </location>
</feature>
<feature type="strand" evidence="70">
    <location>
        <begin position="719"/>
        <end position="722"/>
    </location>
</feature>
<feature type="strand" evidence="74">
    <location>
        <begin position="724"/>
        <end position="727"/>
    </location>
</feature>
<feature type="strand" evidence="70">
    <location>
        <begin position="731"/>
        <end position="737"/>
    </location>
</feature>
<feature type="helix" evidence="70">
    <location>
        <begin position="741"/>
        <end position="746"/>
    </location>
</feature>
<feature type="strand" evidence="68">
    <location>
        <begin position="748"/>
        <end position="750"/>
    </location>
</feature>
<feature type="strand" evidence="70">
    <location>
        <begin position="752"/>
        <end position="755"/>
    </location>
</feature>
<feature type="strand" evidence="70">
    <location>
        <begin position="773"/>
        <end position="780"/>
    </location>
</feature>
<feature type="helix" evidence="70">
    <location>
        <begin position="781"/>
        <end position="792"/>
    </location>
</feature>
<feature type="strand" evidence="70">
    <location>
        <begin position="795"/>
        <end position="799"/>
    </location>
</feature>
<feature type="strand" evidence="70">
    <location>
        <begin position="802"/>
        <end position="806"/>
    </location>
</feature>
<feature type="helix" evidence="69">
    <location>
        <begin position="807"/>
        <end position="809"/>
    </location>
</feature>
<feature type="helix" evidence="70">
    <location>
        <begin position="810"/>
        <end position="813"/>
    </location>
</feature>
<feature type="helix" evidence="70">
    <location>
        <begin position="815"/>
        <end position="818"/>
    </location>
</feature>
<feature type="strand" evidence="67">
    <location>
        <begin position="820"/>
        <end position="822"/>
    </location>
</feature>
<feature type="strand" evidence="70">
    <location>
        <begin position="825"/>
        <end position="831"/>
    </location>
</feature>
<feature type="helix" evidence="70">
    <location>
        <begin position="832"/>
        <end position="835"/>
    </location>
</feature>
<feature type="strand" evidence="73">
    <location>
        <begin position="839"/>
        <end position="841"/>
    </location>
</feature>
<feature type="strand" evidence="70">
    <location>
        <begin position="843"/>
        <end position="845"/>
    </location>
</feature>
<feature type="helix" evidence="70">
    <location>
        <begin position="850"/>
        <end position="852"/>
    </location>
</feature>
<feature type="helix" evidence="70">
    <location>
        <begin position="855"/>
        <end position="867"/>
    </location>
</feature>
<feature type="strand" evidence="70">
    <location>
        <begin position="872"/>
        <end position="877"/>
    </location>
</feature>
<feature type="helix" evidence="70">
    <location>
        <begin position="880"/>
        <end position="882"/>
    </location>
</feature>
<feature type="helix" evidence="70">
    <location>
        <begin position="883"/>
        <end position="892"/>
    </location>
</feature>
<feature type="helix" evidence="68">
    <location>
        <begin position="897"/>
        <end position="899"/>
    </location>
</feature>
<feature type="strand" evidence="70">
    <location>
        <begin position="900"/>
        <end position="904"/>
    </location>
</feature>
<feature type="helix" evidence="70">
    <location>
        <begin position="908"/>
        <end position="914"/>
    </location>
</feature>
<feature type="helix" evidence="70">
    <location>
        <begin position="915"/>
        <end position="917"/>
    </location>
</feature>
<feature type="strand" evidence="70">
    <location>
        <begin position="919"/>
        <end position="922"/>
    </location>
</feature>
<feature type="strand" evidence="70">
    <location>
        <begin position="925"/>
        <end position="927"/>
    </location>
</feature>
<feature type="helix" evidence="70">
    <location>
        <begin position="931"/>
        <end position="938"/>
    </location>
</feature>
<feature type="strand" evidence="70">
    <location>
        <begin position="943"/>
        <end position="945"/>
    </location>
</feature>
<feature type="helix" evidence="70">
    <location>
        <begin position="951"/>
        <end position="953"/>
    </location>
</feature>
<feature type="helix" evidence="70">
    <location>
        <begin position="955"/>
        <end position="963"/>
    </location>
</feature>
<feature type="helix" evidence="70">
    <location>
        <begin position="966"/>
        <end position="968"/>
    </location>
</feature>
<feature type="helix" evidence="70">
    <location>
        <begin position="973"/>
        <end position="985"/>
    </location>
</feature>
<feature type="helix" evidence="70">
    <location>
        <begin position="987"/>
        <end position="1003"/>
    </location>
</feature>
<feature type="helix" evidence="72">
    <location>
        <begin position="1005"/>
        <end position="1007"/>
    </location>
</feature>
<feature type="helix" evidence="70">
    <location>
        <begin position="1009"/>
        <end position="1028"/>
    </location>
</feature>
<feature type="glycosylation site" description="O-linked (GlcNAc) serine" evidence="35">
    <location sequence="O15294-4">
        <position position="10"/>
    </location>
</feature>
<feature type="glycosylation site" description="O-linked (GlcNAc) threonine" evidence="35">
    <location sequence="O15294-4">
        <position position="12"/>
    </location>
</feature>
<feature type="glycosylation site" description="O-linked (GlcNAc) serine" evidence="35">
    <location sequence="O15294-4">
        <position position="18"/>
    </location>
</feature>
<feature type="glycosylation site" description="O-linked (GlcNAc) threonine" evidence="35">
    <location sequence="O15294-4">
        <position position="38"/>
    </location>
</feature>
<feature type="glycosylation site" description="O-linked (GlcNAc) serine" evidence="35">
    <location sequence="O15294-4">
        <position position="52"/>
    </location>
</feature>
<feature type="glycosylation site" description="O-linked (GlcNAc) serine" evidence="35">
    <location sequence="O15294-4">
        <position position="56"/>
    </location>
</feature>
<feature type="mutagenesis site" description="Does not affect global auto-O-GlcNAcylation." evidence="35">
    <original>S</original>
    <variation>A</variation>
    <location sequence="O15294-4">
        <position position="10"/>
    </location>
</feature>
<feature type="mutagenesis site" description="Decreased auto-O-GlcNAcylation." evidence="35">
    <original>T</original>
    <variation>A</variation>
    <location sequence="O15294-4">
        <position position="12"/>
    </location>
</feature>
<feature type="mutagenesis site" description="Does not affect global auto-O-GlcNAcylation." evidence="35">
    <original>S</original>
    <variation>A</variation>
    <location sequence="O15294-4">
        <position position="18"/>
    </location>
</feature>
<feature type="mutagenesis site" description="Does not affect global auto-O-GlcNAcylation." evidence="35">
    <original>T</original>
    <variation>A</variation>
    <location sequence="O15294-4">
        <position position="38"/>
    </location>
</feature>
<feature type="mutagenesis site" description="Does not affect global auto-O-GlcNAcylation." evidence="35">
    <original>S</original>
    <variation>A</variation>
    <location sequence="O15294-4">
        <position position="52"/>
    </location>
</feature>
<feature type="mutagenesis site" description="Increased auto-O-GlcNAcylation." evidence="35">
    <original>S</original>
    <variation>A</variation>
    <location sequence="O15294-4">
        <position position="56"/>
    </location>
</feature>
<feature type="mutagenesis site" description="Loss of enzyme activity." evidence="35">
    <original>H</original>
    <variation>A</variation>
    <location sequence="O15294-4">
        <position position="127"/>
    </location>
</feature>
<keyword id="KW-0002">3D-structure</keyword>
<keyword id="KW-0007">Acetylation</keyword>
<keyword id="KW-0025">Alternative splicing</keyword>
<keyword id="KW-0053">Apoptosis</keyword>
<keyword id="KW-0090">Biological rhythms</keyword>
<keyword id="KW-1003">Cell membrane</keyword>
<keyword id="KW-0966">Cell projection</keyword>
<keyword id="KW-0156">Chromatin regulator</keyword>
<keyword id="KW-0963">Cytoplasm</keyword>
<keyword id="KW-0903">Direct protein sequencing</keyword>
<keyword id="KW-0225">Disease variant</keyword>
<keyword id="KW-0325">Glycoprotein</keyword>
<keyword id="KW-0328">Glycosyltransferase</keyword>
<keyword id="KW-0945">Host-virus interaction</keyword>
<keyword id="KW-0991">Intellectual disability</keyword>
<keyword id="KW-0446">Lipid-binding</keyword>
<keyword id="KW-0472">Membrane</keyword>
<keyword id="KW-0496">Mitochondrion</keyword>
<keyword id="KW-0539">Nucleus</keyword>
<keyword id="KW-0597">Phosphoprotein</keyword>
<keyword id="KW-1267">Proteomics identification</keyword>
<keyword id="KW-1185">Reference proteome</keyword>
<keyword id="KW-0677">Repeat</keyword>
<keyword id="KW-0802">TPR repeat</keyword>
<keyword id="KW-0808">Transferase</keyword>
<keyword id="KW-0832">Ubl conjugation</keyword>
<keyword id="KW-0833">Ubl conjugation pathway</keyword>
<dbReference type="EC" id="2.4.1.255" evidence="5 13 14 34 38 51 52"/>
<dbReference type="EMBL" id="U77413">
    <property type="protein sequence ID" value="AAB63466.1"/>
    <property type="molecule type" value="mRNA"/>
</dbReference>
<dbReference type="EMBL" id="AJ315767">
    <property type="protein sequence ID" value="CAC86127.1"/>
    <property type="molecule type" value="Genomic_DNA"/>
</dbReference>
<dbReference type="EMBL" id="AJ315767">
    <property type="protein sequence ID" value="CAC86128.1"/>
    <property type="molecule type" value="Genomic_DNA"/>
</dbReference>
<dbReference type="EMBL" id="AJ315767">
    <property type="protein sequence ID" value="CAC86129.1"/>
    <property type="molecule type" value="Genomic_DNA"/>
</dbReference>
<dbReference type="EMBL" id="AL050366">
    <property type="protein sequence ID" value="CAB62528.1"/>
    <property type="molecule type" value="mRNA"/>
</dbReference>
<dbReference type="EMBL" id="AL833085">
    <property type="protein sequence ID" value="CAD89970.1"/>
    <property type="molecule type" value="mRNA"/>
</dbReference>
<dbReference type="EMBL" id="BX537844">
    <property type="protein sequence ID" value="CAD97853.1"/>
    <property type="molecule type" value="mRNA"/>
</dbReference>
<dbReference type="EMBL" id="BC014434">
    <property type="protein sequence ID" value="AAH14434.1"/>
    <property type="molecule type" value="mRNA"/>
</dbReference>
<dbReference type="EMBL" id="BC038180">
    <property type="protein sequence ID" value="AAH38180.1"/>
    <property type="molecule type" value="mRNA"/>
</dbReference>
<dbReference type="CCDS" id="CCDS14414.1">
    <molecule id="O15294-1"/>
</dbReference>
<dbReference type="CCDS" id="CCDS35502.1">
    <molecule id="O15294-3"/>
</dbReference>
<dbReference type="RefSeq" id="NP_858058.1">
    <molecule id="O15294-1"/>
    <property type="nucleotide sequence ID" value="NM_181672.3"/>
</dbReference>
<dbReference type="RefSeq" id="NP_858059.1">
    <molecule id="O15294-3"/>
    <property type="nucleotide sequence ID" value="NM_181673.3"/>
</dbReference>
<dbReference type="RefSeq" id="XP_016885396.1">
    <property type="nucleotide sequence ID" value="XM_017029907.1"/>
</dbReference>
<dbReference type="RefSeq" id="XP_016885397.1">
    <property type="nucleotide sequence ID" value="XM_017029908.1"/>
</dbReference>
<dbReference type="PDB" id="1W3B">
    <property type="method" value="X-ray"/>
    <property type="resolution" value="2.85 A"/>
    <property type="chains" value="A/B=26-410"/>
</dbReference>
<dbReference type="PDB" id="3PE3">
    <property type="method" value="X-ray"/>
    <property type="resolution" value="2.78 A"/>
    <property type="chains" value="A/B/C/D=323-1041"/>
</dbReference>
<dbReference type="PDB" id="3PE4">
    <property type="method" value="X-ray"/>
    <property type="resolution" value="1.95 A"/>
    <property type="chains" value="A/C=323-1041"/>
</dbReference>
<dbReference type="PDB" id="3TAX">
    <property type="method" value="X-ray"/>
    <property type="resolution" value="1.88 A"/>
    <property type="chains" value="A/C=323-1041"/>
</dbReference>
<dbReference type="PDB" id="4AY5">
    <property type="method" value="X-ray"/>
    <property type="resolution" value="3.15 A"/>
    <property type="chains" value="A/B/C/D=323-1041"/>
</dbReference>
<dbReference type="PDB" id="4AY6">
    <property type="method" value="X-ray"/>
    <property type="resolution" value="3.30 A"/>
    <property type="chains" value="A/B/C/D=323-1041"/>
</dbReference>
<dbReference type="PDB" id="4CDR">
    <property type="method" value="X-ray"/>
    <property type="resolution" value="3.15 A"/>
    <property type="chains" value="A/B/C/D=323-1041"/>
</dbReference>
<dbReference type="PDB" id="4GYW">
    <property type="method" value="X-ray"/>
    <property type="resolution" value="1.70 A"/>
    <property type="chains" value="A/C=323-1041"/>
</dbReference>
<dbReference type="PDB" id="4GYY">
    <property type="method" value="X-ray"/>
    <property type="resolution" value="1.85 A"/>
    <property type="chains" value="A/C=323-1041"/>
</dbReference>
<dbReference type="PDB" id="4GZ3">
    <property type="method" value="X-ray"/>
    <property type="resolution" value="1.90 A"/>
    <property type="chains" value="A/C=323-1041"/>
</dbReference>
<dbReference type="PDB" id="4GZ5">
    <property type="method" value="X-ray"/>
    <property type="resolution" value="3.08 A"/>
    <property type="chains" value="A/B/C/D=323-1041"/>
</dbReference>
<dbReference type="PDB" id="4GZ6">
    <property type="method" value="X-ray"/>
    <property type="resolution" value="2.98 A"/>
    <property type="chains" value="A/B/C/D=323-1041"/>
</dbReference>
<dbReference type="PDB" id="4N39">
    <property type="method" value="X-ray"/>
    <property type="resolution" value="1.76 A"/>
    <property type="chains" value="A=323-1041"/>
</dbReference>
<dbReference type="PDB" id="4N3A">
    <property type="method" value="X-ray"/>
    <property type="resolution" value="1.88 A"/>
    <property type="chains" value="A=323-1041"/>
</dbReference>
<dbReference type="PDB" id="4N3B">
    <property type="method" value="X-ray"/>
    <property type="resolution" value="2.17 A"/>
    <property type="chains" value="A=323-1041"/>
</dbReference>
<dbReference type="PDB" id="4N3C">
    <property type="method" value="X-ray"/>
    <property type="resolution" value="2.55 A"/>
    <property type="chains" value="A=323-1041"/>
</dbReference>
<dbReference type="PDB" id="4XI9">
    <property type="method" value="X-ray"/>
    <property type="resolution" value="3.10 A"/>
    <property type="chains" value="A/B/C/D=323-1041"/>
</dbReference>
<dbReference type="PDB" id="4XIF">
    <property type="method" value="X-ray"/>
    <property type="resolution" value="3.20 A"/>
    <property type="chains" value="A/B/C/D=323-1041"/>
</dbReference>
<dbReference type="PDB" id="5BNW">
    <property type="method" value="X-ray"/>
    <property type="resolution" value="2.40 A"/>
    <property type="chains" value="A=323-1041"/>
</dbReference>
<dbReference type="PDB" id="5C1D">
    <property type="method" value="X-ray"/>
    <property type="resolution" value="2.05 A"/>
    <property type="chains" value="A=323-1041"/>
</dbReference>
<dbReference type="PDB" id="5HGV">
    <property type="method" value="X-ray"/>
    <property type="resolution" value="2.05 A"/>
    <property type="chains" value="A/C=323-1041"/>
</dbReference>
<dbReference type="PDB" id="5LVV">
    <property type="method" value="X-ray"/>
    <property type="resolution" value="2.54 A"/>
    <property type="chains" value="A=325-1046"/>
</dbReference>
<dbReference type="PDB" id="5LWV">
    <property type="method" value="X-ray"/>
    <property type="resolution" value="1.90 A"/>
    <property type="chains" value="A=325-1046"/>
</dbReference>
<dbReference type="PDB" id="5NPR">
    <property type="method" value="X-ray"/>
    <property type="resolution" value="1.85 A"/>
    <property type="chains" value="A=325-1041"/>
</dbReference>
<dbReference type="PDB" id="5NPS">
    <property type="method" value="X-ray"/>
    <property type="resolution" value="1.68 A"/>
    <property type="chains" value="A=324-1041"/>
</dbReference>
<dbReference type="PDB" id="5VIE">
    <property type="method" value="X-ray"/>
    <property type="resolution" value="2.60 A"/>
    <property type="chains" value="A/C=323-1041"/>
</dbReference>
<dbReference type="PDB" id="5VIF">
    <property type="method" value="X-ray"/>
    <property type="resolution" value="2.25 A"/>
    <property type="chains" value="A=323-1041"/>
</dbReference>
<dbReference type="PDB" id="6E37">
    <property type="method" value="X-ray"/>
    <property type="resolution" value="2.53 A"/>
    <property type="chains" value="A=323-1041"/>
</dbReference>
<dbReference type="PDB" id="6EOU">
    <property type="method" value="X-ray"/>
    <property type="resolution" value="1.75 A"/>
    <property type="chains" value="A=26-410"/>
</dbReference>
<dbReference type="PDB" id="6IBO">
    <property type="method" value="X-ray"/>
    <property type="resolution" value="2.17 A"/>
    <property type="chains" value="A=323-1041"/>
</dbReference>
<dbReference type="PDB" id="6MA1">
    <property type="method" value="X-ray"/>
    <property type="resolution" value="2.75 A"/>
    <property type="chains" value="A=323-1041"/>
</dbReference>
<dbReference type="PDB" id="6MA2">
    <property type="method" value="X-ray"/>
    <property type="resolution" value="2.10 A"/>
    <property type="chains" value="A=323-1041"/>
</dbReference>
<dbReference type="PDB" id="6MA3">
    <property type="method" value="X-ray"/>
    <property type="resolution" value="2.00 A"/>
    <property type="chains" value="A=323-1041"/>
</dbReference>
<dbReference type="PDB" id="6MA4">
    <property type="method" value="X-ray"/>
    <property type="resolution" value="2.00 A"/>
    <property type="chains" value="A=323-1041"/>
</dbReference>
<dbReference type="PDB" id="6MA5">
    <property type="method" value="X-ray"/>
    <property type="resolution" value="2.00 A"/>
    <property type="chains" value="A=323-1041"/>
</dbReference>
<dbReference type="PDB" id="6Q4M">
    <property type="method" value="X-ray"/>
    <property type="resolution" value="2.20 A"/>
    <property type="chains" value="A=323-1041"/>
</dbReference>
<dbReference type="PDB" id="6TKA">
    <property type="method" value="X-ray"/>
    <property type="resolution" value="1.91 A"/>
    <property type="chains" value="AAA=323-1046"/>
</dbReference>
<dbReference type="PDB" id="7NTF">
    <property type="method" value="EM"/>
    <property type="resolution" value="5.32 A"/>
    <property type="chains" value="A/B=2-1046"/>
</dbReference>
<dbReference type="PDB" id="7YEA">
    <property type="method" value="EM"/>
    <property type="resolution" value="3.82 A"/>
    <property type="chains" value="A/B=1-1046"/>
</dbReference>
<dbReference type="PDB" id="7YEH">
    <property type="method" value="EM"/>
    <property type="resolution" value="3.92 A"/>
    <property type="chains" value="A/B=1-1046"/>
</dbReference>
<dbReference type="PDB" id="8CM9">
    <property type="method" value="X-ray"/>
    <property type="resolution" value="2.80 A"/>
    <property type="chains" value="A/B/C/D=323-1041"/>
</dbReference>
<dbReference type="PDB" id="8FE6">
    <property type="method" value="X-ray"/>
    <property type="resolution" value="3.06 A"/>
    <property type="chains" value="A/C/E/G=323-1041"/>
</dbReference>
<dbReference type="PDB" id="8FE7">
    <property type="method" value="X-ray"/>
    <property type="resolution" value="2.98 A"/>
    <property type="chains" value="A/C/E/G=323-1041"/>
</dbReference>
<dbReference type="PDB" id="8FUF">
    <property type="method" value="X-ray"/>
    <property type="resolution" value="3.69 A"/>
    <property type="chains" value="A/C/E/G=323-1041"/>
</dbReference>
<dbReference type="PDBsum" id="1W3B"/>
<dbReference type="PDBsum" id="3PE3"/>
<dbReference type="PDBsum" id="3PE4"/>
<dbReference type="PDBsum" id="3TAX"/>
<dbReference type="PDBsum" id="4AY5"/>
<dbReference type="PDBsum" id="4AY6"/>
<dbReference type="PDBsum" id="4CDR"/>
<dbReference type="PDBsum" id="4GYW"/>
<dbReference type="PDBsum" id="4GYY"/>
<dbReference type="PDBsum" id="4GZ3"/>
<dbReference type="PDBsum" id="4GZ5"/>
<dbReference type="PDBsum" id="4GZ6"/>
<dbReference type="PDBsum" id="4N39"/>
<dbReference type="PDBsum" id="4N3A"/>
<dbReference type="PDBsum" id="4N3B"/>
<dbReference type="PDBsum" id="4N3C"/>
<dbReference type="PDBsum" id="4XI9"/>
<dbReference type="PDBsum" id="4XIF"/>
<dbReference type="PDBsum" id="5BNW"/>
<dbReference type="PDBsum" id="5C1D"/>
<dbReference type="PDBsum" id="5HGV"/>
<dbReference type="PDBsum" id="5LVV"/>
<dbReference type="PDBsum" id="5LWV"/>
<dbReference type="PDBsum" id="5NPR"/>
<dbReference type="PDBsum" id="5NPS"/>
<dbReference type="PDBsum" id="5VIE"/>
<dbReference type="PDBsum" id="5VIF"/>
<dbReference type="PDBsum" id="6E37"/>
<dbReference type="PDBsum" id="6EOU"/>
<dbReference type="PDBsum" id="6IBO"/>
<dbReference type="PDBsum" id="6MA1"/>
<dbReference type="PDBsum" id="6MA2"/>
<dbReference type="PDBsum" id="6MA3"/>
<dbReference type="PDBsum" id="6MA4"/>
<dbReference type="PDBsum" id="6MA5"/>
<dbReference type="PDBsum" id="6Q4M"/>
<dbReference type="PDBsum" id="6TKA"/>
<dbReference type="PDBsum" id="7NTF"/>
<dbReference type="PDBsum" id="7YEA"/>
<dbReference type="PDBsum" id="7YEH"/>
<dbReference type="PDBsum" id="8CM9"/>
<dbReference type="PDBsum" id="8FE6"/>
<dbReference type="PDBsum" id="8FE7"/>
<dbReference type="PDBsum" id="8FUF"/>
<dbReference type="EMDB" id="EMD-12588"/>
<dbReference type="EMDB" id="EMD-33768"/>
<dbReference type="EMDB" id="EMD-33773"/>
<dbReference type="SMR" id="O15294"/>
<dbReference type="BioGRID" id="114049">
    <property type="interactions" value="964"/>
</dbReference>
<dbReference type="ComplexPortal" id="CPX-3323">
    <property type="entry name" value="SIN3A histone deacetylase complex, ES cell-specific variant"/>
</dbReference>
<dbReference type="ComplexPortal" id="CPX-809">
    <property type="entry name" value="NSL histone acetyltransferase complex"/>
</dbReference>
<dbReference type="CORUM" id="O15294"/>
<dbReference type="DIP" id="DIP-33491N"/>
<dbReference type="FunCoup" id="O15294">
    <property type="interactions" value="2502"/>
</dbReference>
<dbReference type="IntAct" id="O15294">
    <property type="interactions" value="176"/>
</dbReference>
<dbReference type="MINT" id="O15294"/>
<dbReference type="STRING" id="9606.ENSP00000362824"/>
<dbReference type="BindingDB" id="O15294"/>
<dbReference type="ChEMBL" id="CHEMBL5955"/>
<dbReference type="CAZy" id="GT41">
    <property type="family name" value="Glycosyltransferase Family 41"/>
</dbReference>
<dbReference type="GlyCosmos" id="O15294">
    <property type="glycosylation" value="7 sites, 1 glycan"/>
</dbReference>
<dbReference type="GlyGen" id="O15294">
    <property type="glycosylation" value="13 sites, 1 O-linked glycan (7 sites)"/>
</dbReference>
<dbReference type="iPTMnet" id="O15294"/>
<dbReference type="MetOSite" id="O15294"/>
<dbReference type="PhosphoSitePlus" id="O15294"/>
<dbReference type="SwissPalm" id="O15294"/>
<dbReference type="BioMuta" id="OGT"/>
<dbReference type="CPTAC" id="CPTAC-1261"/>
<dbReference type="CPTAC" id="CPTAC-1262"/>
<dbReference type="jPOST" id="O15294"/>
<dbReference type="MassIVE" id="O15294"/>
<dbReference type="PaxDb" id="9606-ENSP00000362824"/>
<dbReference type="PeptideAtlas" id="O15294"/>
<dbReference type="ProteomicsDB" id="48562">
    <molecule id="O15294-1"/>
</dbReference>
<dbReference type="ProteomicsDB" id="48563">
    <molecule id="O15294-2"/>
</dbReference>
<dbReference type="ProteomicsDB" id="48564">
    <molecule id="O15294-3"/>
</dbReference>
<dbReference type="ProteomicsDB" id="48565">
    <molecule id="O15294-4"/>
</dbReference>
<dbReference type="Pumba" id="O15294"/>
<dbReference type="Antibodypedia" id="27791">
    <property type="antibodies" value="460 antibodies from 44 providers"/>
</dbReference>
<dbReference type="DNASU" id="8473"/>
<dbReference type="Ensembl" id="ENST00000373701.7">
    <molecule id="O15294-3"/>
    <property type="protein sequence ID" value="ENSP00000362805.3"/>
    <property type="gene ID" value="ENSG00000147162.15"/>
</dbReference>
<dbReference type="Ensembl" id="ENST00000373719.8">
    <molecule id="O15294-1"/>
    <property type="protein sequence ID" value="ENSP00000362824.3"/>
    <property type="gene ID" value="ENSG00000147162.15"/>
</dbReference>
<dbReference type="GeneID" id="8473"/>
<dbReference type="KEGG" id="hsa:8473"/>
<dbReference type="MANE-Select" id="ENST00000373719.8">
    <property type="protein sequence ID" value="ENSP00000362824.3"/>
    <property type="RefSeq nucleotide sequence ID" value="NM_181672.3"/>
    <property type="RefSeq protein sequence ID" value="NP_858058.1"/>
</dbReference>
<dbReference type="UCSC" id="uc004eaa.3">
    <molecule id="O15294-1"/>
    <property type="organism name" value="human"/>
</dbReference>
<dbReference type="AGR" id="HGNC:8127"/>
<dbReference type="CTD" id="8473"/>
<dbReference type="DisGeNET" id="8473"/>
<dbReference type="GeneCards" id="OGT"/>
<dbReference type="HGNC" id="HGNC:8127">
    <property type="gene designation" value="OGT"/>
</dbReference>
<dbReference type="HPA" id="ENSG00000147162">
    <property type="expression patterns" value="Low tissue specificity"/>
</dbReference>
<dbReference type="MalaCards" id="OGT"/>
<dbReference type="MIM" id="300255">
    <property type="type" value="gene"/>
</dbReference>
<dbReference type="MIM" id="300997">
    <property type="type" value="phenotype"/>
</dbReference>
<dbReference type="neXtProt" id="NX_O15294"/>
<dbReference type="OpenTargets" id="ENSG00000147162"/>
<dbReference type="PharmGKB" id="PA31914"/>
<dbReference type="VEuPathDB" id="HostDB:ENSG00000147162"/>
<dbReference type="eggNOG" id="KOG1124">
    <property type="taxonomic scope" value="Eukaryota"/>
</dbReference>
<dbReference type="eggNOG" id="KOG4626">
    <property type="taxonomic scope" value="Eukaryota"/>
</dbReference>
<dbReference type="GeneTree" id="ENSGT00940000155085"/>
<dbReference type="HOGENOM" id="CLU_001721_1_0_1"/>
<dbReference type="InParanoid" id="O15294"/>
<dbReference type="OMA" id="MNESEHF"/>
<dbReference type="OrthoDB" id="9991317at2759"/>
<dbReference type="PAN-GO" id="O15294">
    <property type="GO annotations" value="2 GO annotations based on evolutionary models"/>
</dbReference>
<dbReference type="PhylomeDB" id="O15294"/>
<dbReference type="TreeFam" id="TF105785"/>
<dbReference type="BioCyc" id="MetaCyc:ENSG00000147162-MONOMER"/>
<dbReference type="BRENDA" id="2.4.1.255">
    <property type="organism ID" value="2681"/>
</dbReference>
<dbReference type="PathwayCommons" id="O15294"/>
<dbReference type="Reactome" id="R-HSA-3214847">
    <property type="pathway name" value="HATs acetylate histones"/>
</dbReference>
<dbReference type="Reactome" id="R-HSA-5213460">
    <property type="pathway name" value="RIPK1-mediated regulated necrosis"/>
</dbReference>
<dbReference type="Reactome" id="R-HSA-5675482">
    <property type="pathway name" value="Regulation of necroptotic cell death"/>
</dbReference>
<dbReference type="Reactome" id="R-HSA-5689603">
    <property type="pathway name" value="UCH proteinases"/>
</dbReference>
<dbReference type="Reactome" id="R-HSA-9772755">
    <property type="pathway name" value="Formation of WDR5-containing histone-modifying complexes"/>
</dbReference>
<dbReference type="SABIO-RK" id="O15294"/>
<dbReference type="SignaLink" id="O15294"/>
<dbReference type="SIGNOR" id="O15294"/>
<dbReference type="UniPathway" id="UPA00378"/>
<dbReference type="BioGRID-ORCS" id="8473">
    <property type="hits" value="407 hits in 784 CRISPR screens"/>
</dbReference>
<dbReference type="ChiTaRS" id="OGT">
    <property type="organism name" value="human"/>
</dbReference>
<dbReference type="EvolutionaryTrace" id="O15294"/>
<dbReference type="GeneWiki" id="OGT_(gene)"/>
<dbReference type="GenomeRNAi" id="8473"/>
<dbReference type="Pharos" id="O15294">
    <property type="development level" value="Tchem"/>
</dbReference>
<dbReference type="PRO" id="PR:O15294"/>
<dbReference type="Proteomes" id="UP000005640">
    <property type="component" value="Chromosome X"/>
</dbReference>
<dbReference type="RNAct" id="O15294">
    <property type="molecule type" value="protein"/>
</dbReference>
<dbReference type="Bgee" id="ENSG00000147162">
    <property type="expression patterns" value="Expressed in middle temporal gyrus and 214 other cell types or tissues"/>
</dbReference>
<dbReference type="ExpressionAtlas" id="O15294">
    <property type="expression patterns" value="baseline and differential"/>
</dbReference>
<dbReference type="GO" id="GO:0042995">
    <property type="term" value="C:cell projection"/>
    <property type="evidence" value="ECO:0007669"/>
    <property type="project" value="UniProtKB-SubCell"/>
</dbReference>
<dbReference type="GO" id="GO:0005829">
    <property type="term" value="C:cytosol"/>
    <property type="evidence" value="ECO:0000314"/>
    <property type="project" value="HPA"/>
</dbReference>
<dbReference type="GO" id="GO:0098978">
    <property type="term" value="C:glutamatergic synapse"/>
    <property type="evidence" value="ECO:0007669"/>
    <property type="project" value="Ensembl"/>
</dbReference>
<dbReference type="GO" id="GO:0000123">
    <property type="term" value="C:histone acetyltransferase complex"/>
    <property type="evidence" value="ECO:0000314"/>
    <property type="project" value="UniProtKB"/>
</dbReference>
<dbReference type="GO" id="GO:0031966">
    <property type="term" value="C:mitochondrial membrane"/>
    <property type="evidence" value="ECO:0007669"/>
    <property type="project" value="UniProtKB-SubCell"/>
</dbReference>
<dbReference type="GO" id="GO:0044545">
    <property type="term" value="C:NSL complex"/>
    <property type="evidence" value="ECO:0000314"/>
    <property type="project" value="ComplexPortal"/>
</dbReference>
<dbReference type="GO" id="GO:0005654">
    <property type="term" value="C:nucleoplasm"/>
    <property type="evidence" value="ECO:0000314"/>
    <property type="project" value="HPA"/>
</dbReference>
<dbReference type="GO" id="GO:0005634">
    <property type="term" value="C:nucleus"/>
    <property type="evidence" value="ECO:0000314"/>
    <property type="project" value="UniProtKB"/>
</dbReference>
<dbReference type="GO" id="GO:0005886">
    <property type="term" value="C:plasma membrane"/>
    <property type="evidence" value="ECO:0000314"/>
    <property type="project" value="HPA"/>
</dbReference>
<dbReference type="GO" id="GO:0017122">
    <property type="term" value="C:protein N-acetylglucosaminyltransferase complex"/>
    <property type="evidence" value="ECO:0000314"/>
    <property type="project" value="UniProtKB"/>
</dbReference>
<dbReference type="GO" id="GO:0032991">
    <property type="term" value="C:protein-containing complex"/>
    <property type="evidence" value="ECO:0000314"/>
    <property type="project" value="UniProtKB"/>
</dbReference>
<dbReference type="GO" id="GO:0070822">
    <property type="term" value="C:Sin3-type complex"/>
    <property type="evidence" value="ECO:0000303"/>
    <property type="project" value="ComplexPortal"/>
</dbReference>
<dbReference type="GO" id="GO:0008375">
    <property type="term" value="F:acetylglucosaminyltransferase activity"/>
    <property type="evidence" value="ECO:0000304"/>
    <property type="project" value="ProtInc"/>
</dbReference>
<dbReference type="GO" id="GO:0031490">
    <property type="term" value="F:chromatin DNA binding"/>
    <property type="evidence" value="ECO:0007669"/>
    <property type="project" value="Ensembl"/>
</dbReference>
<dbReference type="GO" id="GO:0005547">
    <property type="term" value="F:phosphatidylinositol-3,4,5-trisphosphate binding"/>
    <property type="evidence" value="ECO:0000314"/>
    <property type="project" value="UniProtKB"/>
</dbReference>
<dbReference type="GO" id="GO:0097363">
    <property type="term" value="F:protein O-acetylglucosaminyltransferase activity"/>
    <property type="evidence" value="ECO:0000314"/>
    <property type="project" value="UniProtKB"/>
</dbReference>
<dbReference type="GO" id="GO:0006915">
    <property type="term" value="P:apoptotic process"/>
    <property type="evidence" value="ECO:0000314"/>
    <property type="project" value="UniProtKB"/>
</dbReference>
<dbReference type="GO" id="GO:0071333">
    <property type="term" value="P:cellular response to glucose stimulus"/>
    <property type="evidence" value="ECO:0000314"/>
    <property type="project" value="UniProtKB"/>
</dbReference>
<dbReference type="GO" id="GO:0006325">
    <property type="term" value="P:chromatin organization"/>
    <property type="evidence" value="ECO:0007669"/>
    <property type="project" value="UniProtKB-KW"/>
</dbReference>
<dbReference type="GO" id="GO:0032922">
    <property type="term" value="P:circadian regulation of gene expression"/>
    <property type="evidence" value="ECO:0000250"/>
    <property type="project" value="UniProtKB"/>
</dbReference>
<dbReference type="GO" id="GO:0030097">
    <property type="term" value="P:hemopoiesis"/>
    <property type="evidence" value="ECO:0000250"/>
    <property type="project" value="ARUK-UCL"/>
</dbReference>
<dbReference type="GO" id="GO:0000423">
    <property type="term" value="P:mitophagy"/>
    <property type="evidence" value="ECO:0000250"/>
    <property type="project" value="ARUK-UCL"/>
</dbReference>
<dbReference type="GO" id="GO:0030336">
    <property type="term" value="P:negative regulation of cell migration"/>
    <property type="evidence" value="ECO:0000303"/>
    <property type="project" value="ComplexPortal"/>
</dbReference>
<dbReference type="GO" id="GO:0160076">
    <property type="term" value="P:negative regulation of non-canonical inflammasome complex assembly"/>
    <property type="evidence" value="ECO:0000314"/>
    <property type="project" value="UniProtKB"/>
</dbReference>
<dbReference type="GO" id="GO:0032435">
    <property type="term" value="P:negative regulation of proteasomal ubiquitin-dependent protein catabolic process"/>
    <property type="evidence" value="ECO:0000315"/>
    <property type="project" value="UniProtKB"/>
</dbReference>
<dbReference type="GO" id="GO:0031397">
    <property type="term" value="P:negative regulation of protein ubiquitination"/>
    <property type="evidence" value="ECO:0000315"/>
    <property type="project" value="UniProtKB"/>
</dbReference>
<dbReference type="GO" id="GO:1902455">
    <property type="term" value="P:negative regulation of stem cell population maintenance"/>
    <property type="evidence" value="ECO:0000303"/>
    <property type="project" value="ComplexPortal"/>
</dbReference>
<dbReference type="GO" id="GO:0000122">
    <property type="term" value="P:negative regulation of transcription by RNA polymerase II"/>
    <property type="evidence" value="ECO:0000303"/>
    <property type="project" value="ComplexPortal"/>
</dbReference>
<dbReference type="GO" id="GO:0030512">
    <property type="term" value="P:negative regulation of transforming growth factor beta receptor signaling pathway"/>
    <property type="evidence" value="ECO:0000303"/>
    <property type="project" value="ComplexPortal"/>
</dbReference>
<dbReference type="GO" id="GO:0120162">
    <property type="term" value="P:positive regulation of cold-induced thermogenesis"/>
    <property type="evidence" value="ECO:0000250"/>
    <property type="project" value="YuBioLab"/>
</dbReference>
<dbReference type="GO" id="GO:0045893">
    <property type="term" value="P:positive regulation of DNA-templated transcription"/>
    <property type="evidence" value="ECO:0000303"/>
    <property type="project" value="ComplexPortal"/>
</dbReference>
<dbReference type="GO" id="GO:0046889">
    <property type="term" value="P:positive regulation of lipid biosynthetic process"/>
    <property type="evidence" value="ECO:0007669"/>
    <property type="project" value="Ensembl"/>
</dbReference>
<dbReference type="GO" id="GO:0045862">
    <property type="term" value="P:positive regulation of proteolysis"/>
    <property type="evidence" value="ECO:0000314"/>
    <property type="project" value="UniProtKB"/>
</dbReference>
<dbReference type="GO" id="GO:1902459">
    <property type="term" value="P:positive regulation of stem cell population maintenance"/>
    <property type="evidence" value="ECO:0000303"/>
    <property type="project" value="ComplexPortal"/>
</dbReference>
<dbReference type="GO" id="GO:1904263">
    <property type="term" value="P:positive regulation of TORC1 signaling"/>
    <property type="evidence" value="ECO:0000314"/>
    <property type="project" value="UniProtKB"/>
</dbReference>
<dbReference type="GO" id="GO:0045944">
    <property type="term" value="P:positive regulation of transcription by RNA polymerase II"/>
    <property type="evidence" value="ECO:0000314"/>
    <property type="project" value="UniProtKB"/>
</dbReference>
<dbReference type="GO" id="GO:0000432">
    <property type="term" value="P:positive regulation of transcription from RNA polymerase II promoter by glucose"/>
    <property type="evidence" value="ECO:0007669"/>
    <property type="project" value="Ensembl"/>
</dbReference>
<dbReference type="GO" id="GO:0045727">
    <property type="term" value="P:positive regulation of translation"/>
    <property type="evidence" value="ECO:0000314"/>
    <property type="project" value="UniProt"/>
</dbReference>
<dbReference type="GO" id="GO:0006493">
    <property type="term" value="P:protein O-linked glycosylation"/>
    <property type="evidence" value="ECO:0000314"/>
    <property type="project" value="UniProtKB"/>
</dbReference>
<dbReference type="GO" id="GO:0016485">
    <property type="term" value="P:protein processing"/>
    <property type="evidence" value="ECO:0000315"/>
    <property type="project" value="UniProtKB"/>
</dbReference>
<dbReference type="GO" id="GO:0006111">
    <property type="term" value="P:regulation of gluconeogenesis"/>
    <property type="evidence" value="ECO:0000250"/>
    <property type="project" value="UniProtKB"/>
</dbReference>
<dbReference type="GO" id="GO:0006110">
    <property type="term" value="P:regulation of glycolytic process"/>
    <property type="evidence" value="ECO:0000314"/>
    <property type="project" value="UniProtKB"/>
</dbReference>
<dbReference type="GO" id="GO:0046626">
    <property type="term" value="P:regulation of insulin receptor signaling pathway"/>
    <property type="evidence" value="ECO:0000314"/>
    <property type="project" value="UniProtKB"/>
</dbReference>
<dbReference type="GO" id="GO:0060544">
    <property type="term" value="P:regulation of necroptotic process"/>
    <property type="evidence" value="ECO:0000304"/>
    <property type="project" value="Reactome"/>
</dbReference>
<dbReference type="GO" id="GO:0098696">
    <property type="term" value="P:regulation of neurotransmitter receptor localization to postsynaptic specialization membrane"/>
    <property type="evidence" value="ECO:0007669"/>
    <property type="project" value="Ensembl"/>
</dbReference>
<dbReference type="GO" id="GO:0035020">
    <property type="term" value="P:regulation of Rac protein signal transduction"/>
    <property type="evidence" value="ECO:0000314"/>
    <property type="project" value="UniProtKB"/>
</dbReference>
<dbReference type="GO" id="GO:0051963">
    <property type="term" value="P:regulation of synapse assembly"/>
    <property type="evidence" value="ECO:0007669"/>
    <property type="project" value="Ensembl"/>
</dbReference>
<dbReference type="GO" id="GO:0006357">
    <property type="term" value="P:regulation of transcription by RNA polymerase II"/>
    <property type="evidence" value="ECO:0000315"/>
    <property type="project" value="UniProtKB"/>
</dbReference>
<dbReference type="GO" id="GO:0032868">
    <property type="term" value="P:response to insulin"/>
    <property type="evidence" value="ECO:0000314"/>
    <property type="project" value="UniProtKB"/>
</dbReference>
<dbReference type="GO" id="GO:0007584">
    <property type="term" value="P:response to nutrient"/>
    <property type="evidence" value="ECO:0000304"/>
    <property type="project" value="ProtInc"/>
</dbReference>
<dbReference type="GO" id="GO:0007165">
    <property type="term" value="P:signal transduction"/>
    <property type="evidence" value="ECO:0000304"/>
    <property type="project" value="ProtInc"/>
</dbReference>
<dbReference type="FunFam" id="1.25.40.10:FF:000013">
    <property type="entry name" value="UDP-N-acetylglucosamine--peptide N-acetylglucosaminyltransferase 110 kDa subunit"/>
    <property type="match status" value="1"/>
</dbReference>
<dbReference type="FunFam" id="1.25.40.10:FF:000019">
    <property type="entry name" value="UDP-N-acetylglucosamine--peptide N-acetylglucosaminyltransferase 110 kDa subunit"/>
    <property type="match status" value="1"/>
</dbReference>
<dbReference type="FunFam" id="3.30.720.150:FF:000001">
    <property type="entry name" value="UDP-N-acetylglucosamine--peptide N-acetylglucosaminyltransferase 110 kDa subunit"/>
    <property type="match status" value="1"/>
</dbReference>
<dbReference type="FunFam" id="3.40.50.11380:FF:000001">
    <property type="entry name" value="UDP-N-acetylglucosamine--peptide N-acetylglucosaminyltransferase 110 kDa subunit"/>
    <property type="match status" value="1"/>
</dbReference>
<dbReference type="FunFam" id="3.40.50.2000:FF:000012">
    <property type="entry name" value="UDP-N-acetylglucosamine--peptide N-acetylglucosaminyltransferase 110 kDa subunit"/>
    <property type="match status" value="1"/>
</dbReference>
<dbReference type="Gene3D" id="3.30.720.150">
    <property type="match status" value="1"/>
</dbReference>
<dbReference type="Gene3D" id="3.40.50.11380">
    <property type="match status" value="1"/>
</dbReference>
<dbReference type="Gene3D" id="3.40.50.2000">
    <property type="entry name" value="Glycogen Phosphorylase B"/>
    <property type="match status" value="1"/>
</dbReference>
<dbReference type="Gene3D" id="1.25.40.10">
    <property type="entry name" value="Tetratricopeptide repeat domain"/>
    <property type="match status" value="2"/>
</dbReference>
<dbReference type="InterPro" id="IPR037919">
    <property type="entry name" value="OGT"/>
</dbReference>
<dbReference type="InterPro" id="IPR029489">
    <property type="entry name" value="OGT/SEC/SPY_C"/>
</dbReference>
<dbReference type="InterPro" id="IPR011990">
    <property type="entry name" value="TPR-like_helical_dom_sf"/>
</dbReference>
<dbReference type="InterPro" id="IPR019734">
    <property type="entry name" value="TPR_rpt"/>
</dbReference>
<dbReference type="PANTHER" id="PTHR44366">
    <property type="entry name" value="UDP-N-ACETYLGLUCOSAMINE--PEPTIDE N-ACETYLGLUCOSAMINYLTRANSFERASE 110 KDA SUBUNIT"/>
    <property type="match status" value="1"/>
</dbReference>
<dbReference type="PANTHER" id="PTHR44366:SF1">
    <property type="entry name" value="UDP-N-ACETYLGLUCOSAMINE--PEPTIDE N-ACETYLGLUCOSAMINYLTRANSFERASE 110 KDA SUBUNIT"/>
    <property type="match status" value="1"/>
</dbReference>
<dbReference type="Pfam" id="PF13844">
    <property type="entry name" value="Glyco_transf_41"/>
    <property type="match status" value="1"/>
</dbReference>
<dbReference type="Pfam" id="PF00515">
    <property type="entry name" value="TPR_1"/>
    <property type="match status" value="2"/>
</dbReference>
<dbReference type="Pfam" id="PF13414">
    <property type="entry name" value="TPR_11"/>
    <property type="match status" value="3"/>
</dbReference>
<dbReference type="Pfam" id="PF13424">
    <property type="entry name" value="TPR_12"/>
    <property type="match status" value="1"/>
</dbReference>
<dbReference type="Pfam" id="PF13181">
    <property type="entry name" value="TPR_8"/>
    <property type="match status" value="2"/>
</dbReference>
<dbReference type="SMART" id="SM00028">
    <property type="entry name" value="TPR"/>
    <property type="match status" value="12"/>
</dbReference>
<dbReference type="SUPFAM" id="SSF48452">
    <property type="entry name" value="TPR-like"/>
    <property type="match status" value="2"/>
</dbReference>
<dbReference type="PROSITE" id="PS50005">
    <property type="entry name" value="TPR"/>
    <property type="match status" value="12"/>
</dbReference>
<dbReference type="PROSITE" id="PS50293">
    <property type="entry name" value="TPR_REGION"/>
    <property type="match status" value="1"/>
</dbReference>
<evidence type="ECO:0000250" key="1">
    <source>
        <dbReference type="UniProtKB" id="P56558"/>
    </source>
</evidence>
<evidence type="ECO:0000250" key="2">
    <source>
        <dbReference type="UniProtKB" id="Q8CGY8"/>
    </source>
</evidence>
<evidence type="ECO:0000255" key="3"/>
<evidence type="ECO:0000269" key="4">
    <source>
    </source>
</evidence>
<evidence type="ECO:0000269" key="5">
    <source>
    </source>
</evidence>
<evidence type="ECO:0000269" key="6">
    <source>
    </source>
</evidence>
<evidence type="ECO:0000269" key="7">
    <source>
    </source>
</evidence>
<evidence type="ECO:0000269" key="8">
    <source>
    </source>
</evidence>
<evidence type="ECO:0000269" key="9">
    <source>
    </source>
</evidence>
<evidence type="ECO:0000269" key="10">
    <source>
    </source>
</evidence>
<evidence type="ECO:0000269" key="11">
    <source>
    </source>
</evidence>
<evidence type="ECO:0000269" key="12">
    <source>
    </source>
</evidence>
<evidence type="ECO:0000269" key="13">
    <source>
    </source>
</evidence>
<evidence type="ECO:0000269" key="14">
    <source>
    </source>
</evidence>
<evidence type="ECO:0000269" key="15">
    <source>
    </source>
</evidence>
<evidence type="ECO:0000269" key="16">
    <source>
    </source>
</evidence>
<evidence type="ECO:0000269" key="17">
    <source>
    </source>
</evidence>
<evidence type="ECO:0000269" key="18">
    <source>
    </source>
</evidence>
<evidence type="ECO:0000269" key="19">
    <source>
    </source>
</evidence>
<evidence type="ECO:0000269" key="20">
    <source>
    </source>
</evidence>
<evidence type="ECO:0000269" key="21">
    <source>
    </source>
</evidence>
<evidence type="ECO:0000269" key="22">
    <source>
    </source>
</evidence>
<evidence type="ECO:0000269" key="23">
    <source>
    </source>
</evidence>
<evidence type="ECO:0000269" key="24">
    <source>
    </source>
</evidence>
<evidence type="ECO:0000269" key="25">
    <source>
    </source>
</evidence>
<evidence type="ECO:0000269" key="26">
    <source>
    </source>
</evidence>
<evidence type="ECO:0000269" key="27">
    <source>
    </source>
</evidence>
<evidence type="ECO:0000269" key="28">
    <source>
    </source>
</evidence>
<evidence type="ECO:0000269" key="29">
    <source>
    </source>
</evidence>
<evidence type="ECO:0000269" key="30">
    <source>
    </source>
</evidence>
<evidence type="ECO:0000269" key="31">
    <source>
    </source>
</evidence>
<evidence type="ECO:0000269" key="32">
    <source>
    </source>
</evidence>
<evidence type="ECO:0000269" key="33">
    <source>
    </source>
</evidence>
<evidence type="ECO:0000269" key="34">
    <source>
    </source>
</evidence>
<evidence type="ECO:0000269" key="35">
    <source>
    </source>
</evidence>
<evidence type="ECO:0000269" key="36">
    <source>
    </source>
</evidence>
<evidence type="ECO:0000269" key="37">
    <source>
    </source>
</evidence>
<evidence type="ECO:0000269" key="38">
    <source>
    </source>
</evidence>
<evidence type="ECO:0000269" key="39">
    <source>
    </source>
</evidence>
<evidence type="ECO:0000269" key="40">
    <source>
    </source>
</evidence>
<evidence type="ECO:0000269" key="41">
    <source>
    </source>
</evidence>
<evidence type="ECO:0000269" key="42">
    <source ref="5"/>
</evidence>
<evidence type="ECO:0000303" key="43">
    <source>
    </source>
</evidence>
<evidence type="ECO:0000303" key="44">
    <source>
    </source>
</evidence>
<evidence type="ECO:0000303" key="45">
    <source>
    </source>
</evidence>
<evidence type="ECO:0000303" key="46">
    <source>
    </source>
</evidence>
<evidence type="ECO:0000303" key="47">
    <source>
    </source>
</evidence>
<evidence type="ECO:0000303" key="48">
    <source>
    </source>
</evidence>
<evidence type="ECO:0000305" key="49"/>
<evidence type="ECO:0000305" key="50">
    <source>
    </source>
</evidence>
<evidence type="ECO:0000305" key="51">
    <source>
    </source>
</evidence>
<evidence type="ECO:0000305" key="52">
    <source>
    </source>
</evidence>
<evidence type="ECO:0000312" key="53">
    <source>
        <dbReference type="HGNC" id="HGNC:8127"/>
    </source>
</evidence>
<evidence type="ECO:0007744" key="54">
    <source>
        <dbReference type="PDB" id="4GYW"/>
    </source>
</evidence>
<evidence type="ECO:0007744" key="55">
    <source>
        <dbReference type="PDB" id="4GYY"/>
    </source>
</evidence>
<evidence type="ECO:0007744" key="56">
    <source>
        <dbReference type="PDB" id="4GZ3"/>
    </source>
</evidence>
<evidence type="ECO:0007744" key="57">
    <source>
        <dbReference type="PDB" id="4GZ5"/>
    </source>
</evidence>
<evidence type="ECO:0007744" key="58">
    <source>
        <dbReference type="PDB" id="4GZ6"/>
    </source>
</evidence>
<evidence type="ECO:0007744" key="59">
    <source>
        <dbReference type="PDB" id="4XI9"/>
    </source>
</evidence>
<evidence type="ECO:0007744" key="60">
    <source>
        <dbReference type="PDB" id="4XIF"/>
    </source>
</evidence>
<evidence type="ECO:0007744" key="61">
    <source>
        <dbReference type="PDB" id="5BNW"/>
    </source>
</evidence>
<evidence type="ECO:0007744" key="62">
    <source>
        <dbReference type="PDB" id="5C1D"/>
    </source>
</evidence>
<evidence type="ECO:0007744" key="63">
    <source>
    </source>
</evidence>
<evidence type="ECO:0007744" key="64">
    <source>
    </source>
</evidence>
<evidence type="ECO:0007744" key="65">
    <source>
    </source>
</evidence>
<evidence type="ECO:0007829" key="66">
    <source>
        <dbReference type="PDB" id="1W3B"/>
    </source>
</evidence>
<evidence type="ECO:0007829" key="67">
    <source>
        <dbReference type="PDB" id="4AY5"/>
    </source>
</evidence>
<evidence type="ECO:0007829" key="68">
    <source>
        <dbReference type="PDB" id="4GYW"/>
    </source>
</evidence>
<evidence type="ECO:0007829" key="69">
    <source>
        <dbReference type="PDB" id="4GYY"/>
    </source>
</evidence>
<evidence type="ECO:0007829" key="70">
    <source>
        <dbReference type="PDB" id="5NPS"/>
    </source>
</evidence>
<evidence type="ECO:0007829" key="71">
    <source>
        <dbReference type="PDB" id="6EOU"/>
    </source>
</evidence>
<evidence type="ECO:0007829" key="72">
    <source>
        <dbReference type="PDB" id="6MA4"/>
    </source>
</evidence>
<evidence type="ECO:0007829" key="73">
    <source>
        <dbReference type="PDB" id="6MA5"/>
    </source>
</evidence>
<evidence type="ECO:0007829" key="74">
    <source>
        <dbReference type="PDB" id="8CM9"/>
    </source>
</evidence>
<evidence type="ECO:0007829" key="75">
    <source>
        <dbReference type="PDB" id="8FE6"/>
    </source>
</evidence>
<name>OGT1_HUMAN</name>
<reference key="1">
    <citation type="journal article" date="1997" name="J. Biol. Chem.">
        <title>O-linked GlcNAc transferase is a conserved nucleocytoplasmic protein containing tetratricopeptide repeats.</title>
        <authorList>
            <person name="Lubas W.A."/>
            <person name="Frank D.W."/>
            <person name="Krause M."/>
            <person name="Hanover J.A."/>
        </authorList>
    </citation>
    <scope>NUCLEOTIDE SEQUENCE [MRNA] (ISOFORM 2)</scope>
    <scope>PROTEIN SEQUENCE OF 227-236 AND 955-971</scope>
    <scope>TISSUE SPECIFICITY</scope>
    <source>
        <tissue>Liver</tissue>
    </source>
</reference>
<reference key="2">
    <citation type="journal article" date="2002" name="Mamm. Genome">
        <title>Human O-GlcNAc transferase (OGT): genomic structure, analysis of splice variants, fine mapping in Xq13.1.</title>
        <authorList>
            <person name="Nolte D."/>
            <person name="Muller U."/>
        </authorList>
    </citation>
    <scope>NUCLEOTIDE SEQUENCE [GENOMIC DNA] (ISOFORMS 1; 2 AND 3)</scope>
</reference>
<reference key="3">
    <citation type="journal article" date="2007" name="BMC Genomics">
        <title>The full-ORF clone resource of the German cDNA consortium.</title>
        <authorList>
            <person name="Bechtel S."/>
            <person name="Rosenfelder H."/>
            <person name="Duda A."/>
            <person name="Schmidt C.P."/>
            <person name="Ernst U."/>
            <person name="Wellenreuther R."/>
            <person name="Mehrle A."/>
            <person name="Schuster C."/>
            <person name="Bahr A."/>
            <person name="Bloecker H."/>
            <person name="Heubner D."/>
            <person name="Hoerlein A."/>
            <person name="Michel G."/>
            <person name="Wedler H."/>
            <person name="Koehrer K."/>
            <person name="Ottenwaelder B."/>
            <person name="Poustka A."/>
            <person name="Wiemann S."/>
            <person name="Schupp I."/>
        </authorList>
    </citation>
    <scope>NUCLEOTIDE SEQUENCE [LARGE SCALE MRNA] (ISOFORMS 1 AND 4)</scope>
    <source>
        <tissue>Endometrium</tissue>
        <tissue>Fetal brain</tissue>
        <tissue>Spinal cord</tissue>
    </source>
</reference>
<reference key="4">
    <citation type="journal article" date="2004" name="Genome Res.">
        <title>The status, quality, and expansion of the NIH full-length cDNA project: the Mammalian Gene Collection (MGC).</title>
        <authorList>
            <consortium name="The MGC Project Team"/>
        </authorList>
    </citation>
    <scope>NUCLEOTIDE SEQUENCE [LARGE SCALE MRNA] (ISOFORMS 1 AND 3)</scope>
    <source>
        <tissue>Colon</tissue>
        <tissue>Pancreas</tissue>
    </source>
</reference>
<reference key="5">
    <citation type="submission" date="2008-02" db="UniProtKB">
        <authorList>
            <person name="Bienvenut W.V."/>
            <person name="Dhillon A.S."/>
            <person name="Kolch W."/>
        </authorList>
    </citation>
    <scope>PROTEIN SEQUENCE OF 2-17; 31-42; 161-168; 244-250; 339-348; 734-752; 868-877 AND 1002-1010</scope>
    <scope>CLEAVAGE OF INITIATOR METHIONINE</scope>
    <scope>ACETYLATION AT ALA-2</scope>
    <scope>IDENTIFICATION BY MASS SPECTROMETRY</scope>
    <source>
        <tissue>Hepatoma</tissue>
    </source>
</reference>
<reference key="6">
    <citation type="journal article" date="2002" name="Cell">
        <title>Recruitment of O-GlcNAc transferase to promoters by corepressor mSin3A: coupling protein O-GlcNAcylation to transcriptional repression.</title>
        <authorList>
            <person name="Yang X."/>
            <person name="Zhang F."/>
            <person name="Kudlow J.E."/>
        </authorList>
    </citation>
    <scope>FUNCTION</scope>
    <scope>INTERACTION WITH SIN3A</scope>
</reference>
<reference key="7">
    <citation type="journal article" date="2003" name="Genes Dev.">
        <title>Human Sin3 deacetylase and trithorax-related Set1/Ash2 histone H3-K4 methyltransferase are tethered together selectively by the cell-proliferation factor HCF-1.</title>
        <authorList>
            <person name="Wysocka J."/>
            <person name="Myers M.P."/>
            <person name="Laherty C.D."/>
            <person name="Eisenman R.N."/>
            <person name="Herr W."/>
        </authorList>
    </citation>
    <scope>INTERACTION WITH HCFC1</scope>
</reference>
<reference key="8">
    <citation type="journal article" date="2008" name="Proc. Natl. Acad. Sci. U.S.A.">
        <title>A quantitative atlas of mitotic phosphorylation.</title>
        <authorList>
            <person name="Dephoure N."/>
            <person name="Zhou C."/>
            <person name="Villen J."/>
            <person name="Beausoleil S.A."/>
            <person name="Bakalarski C.E."/>
            <person name="Elledge S.J."/>
            <person name="Gygi S.P."/>
        </authorList>
    </citation>
    <scope>IDENTIFICATION BY MASS SPECTROMETRY [LARGE SCALE ANALYSIS]</scope>
    <source>
        <tissue>Cervix carcinoma</tissue>
    </source>
</reference>
<reference key="9">
    <citation type="journal article" date="2009" name="Anal. Chem.">
        <title>Lys-N and trypsin cover complementary parts of the phosphoproteome in a refined SCX-based approach.</title>
        <authorList>
            <person name="Gauci S."/>
            <person name="Helbig A.O."/>
            <person name="Slijper M."/>
            <person name="Krijgsveld J."/>
            <person name="Heck A.J."/>
            <person name="Mohammed S."/>
        </authorList>
    </citation>
    <scope>ACETYLATION [LARGE SCALE ANALYSIS] AT ALA-2</scope>
    <scope>CLEAVAGE OF INITIATOR METHIONINE [LARGE SCALE ANALYSIS]</scope>
    <scope>IDENTIFICATION BY MASS SPECTROMETRY [LARGE SCALE ANALYSIS]</scope>
</reference>
<reference key="10">
    <citation type="journal article" date="2009" name="Brain">
        <title>Reduced O-GlcNAcylation links lower brain glucose metabolism and tau pathology in Alzheimer's disease.</title>
        <authorList>
            <person name="Liu F."/>
            <person name="Shi J."/>
            <person name="Tanimukai H."/>
            <person name="Gu J."/>
            <person name="Gu J."/>
            <person name="Grundke-Iqbal I."/>
            <person name="Iqbal K."/>
            <person name="Gong C.X."/>
        </authorList>
    </citation>
    <scope>FUNCTION</scope>
    <scope>ASSOCIATION WITH ALZHEIMER DISEASE</scope>
</reference>
<reference key="11">
    <citation type="journal article" date="2009" name="J. Biol. Chem.">
        <title>Up-regulation of O-GlcNAc transferase with glucose deprivation in HepG2 cells is mediated by decreased hexosamine pathway flux.</title>
        <authorList>
            <person name="Taylor R.P."/>
            <person name="Geisler T.S."/>
            <person name="Chambers J.H."/>
            <person name="McClain D.A."/>
        </authorList>
    </citation>
    <scope>INDUCTION</scope>
</reference>
<reference key="12">
    <citation type="journal article" date="2009" name="Nature">
        <title>GlcNAcylation of a histone methyltransferase in retinoic-acid-induced granulopoiesis.</title>
        <authorList>
            <person name="Fujiki R."/>
            <person name="Chikanishi T."/>
            <person name="Hashiba W."/>
            <person name="Ito H."/>
            <person name="Takada I."/>
            <person name="Roeder R.G."/>
            <person name="Kitagawa H."/>
            <person name="Kato S."/>
        </authorList>
    </citation>
    <scope>RETRACTED PAPER</scope>
</reference>
<reference key="13">
    <citation type="journal article" date="2014" name="Nature">
        <title>Retraction: GlcNAcylation of a histone methyltransferase in retinoic-acid-induced granulopoiesis.</title>
        <authorList>
            <person name="Fujiki R."/>
            <person name="Chikanishi T."/>
            <person name="Hashiba W."/>
            <person name="Ito H."/>
            <person name="Takada I."/>
            <person name="Roeder R.G."/>
            <person name="Kitagawa H."/>
            <person name="Kato S."/>
        </authorList>
    </citation>
    <scope>RETRACTION NOTICE OF PUBMED:19377461</scope>
</reference>
<reference key="14">
    <citation type="journal article" date="2010" name="J. Biol. Chem.">
        <title>Subunit composition and substrate specificity of a MOF-containing histone acetyltransferase distinct from the male-specific lethal (MSL) complex.</title>
        <authorList>
            <person name="Cai Y."/>
            <person name="Jin J."/>
            <person name="Swanson S.K."/>
            <person name="Cole M.D."/>
            <person name="Choi S.H."/>
            <person name="Florens L."/>
            <person name="Washburn M.P."/>
            <person name="Conaway J.W."/>
            <person name="Conaway R.C."/>
        </authorList>
    </citation>
    <scope>FUNCTION IN HISTONE H4 ACETYLATION</scope>
    <scope>IDENTIFICATION IN NSL COMPLEX</scope>
    <scope>SUBCELLULAR LOCATION</scope>
</reference>
<reference key="15">
    <citation type="journal article" date="2010" name="J. Biol. Chem.">
        <title>Regulation of insulin receptor substrate 1 (IRS-1)/AKT kinase-mediated insulin signaling by O-Linked beta-N-acetylglucosamine in 3T3-L1 adipocytes.</title>
        <authorList>
            <person name="Whelan S.A."/>
            <person name="Dias W.B."/>
            <person name="Thiruneelakantapillai L."/>
            <person name="Lane M.D."/>
            <person name="Hart G.W."/>
        </authorList>
    </citation>
    <scope>FUNCTION</scope>
    <scope>POSSIBLE ASSOCIATION WITH DIABETES</scope>
</reference>
<reference key="16">
    <citation type="journal article" date="2010" name="J. Biol. Chem.">
        <title>The THAP-zinc finger protein THAP1 associates with coactivator HCF-1 and O-GlcNAc transferase: a link between DYT6 and DYT3 dystonias.</title>
        <authorList>
            <person name="Mazars R."/>
            <person name="Gonzalez-de-Peredo A."/>
            <person name="Cayrol C."/>
            <person name="Lavigne A.C."/>
            <person name="Vogel J.L."/>
            <person name="Ortega N."/>
            <person name="Lacroix C."/>
            <person name="Gautier V."/>
            <person name="Huet G."/>
            <person name="Ray A."/>
            <person name="Monsarrat B."/>
            <person name="Kristie T.M."/>
            <person name="Girard J.P."/>
        </authorList>
    </citation>
    <scope>IDENTIFICATION BY MASS SPECTROMETRY IN A THAP1/THAP3-HCFC1-OGT COMPLEX</scope>
    <scope>INTERACTION WITH THAP1 AND THAP3</scope>
    <scope>FUNCTION</scope>
</reference>
<reference key="17">
    <citation type="journal article" date="2011" name="Amino Acids">
        <title>Elevated O-GlcNAc-dependent signaling through inducible mOGT expression selectively triggers apoptosis.</title>
        <authorList>
            <person name="Shin S.H."/>
            <person name="Love D.C."/>
            <person name="Hanover J.A."/>
        </authorList>
    </citation>
    <scope>FUNCTION (ISOFORM 2)</scope>
    <scope>SUBCELLULAR LOCATION (ISOFORM 2)</scope>
</reference>
<reference key="18">
    <citation type="journal article" date="2011" name="BMC Syst. Biol.">
        <title>Initial characterization of the human central proteome.</title>
        <authorList>
            <person name="Burkard T.R."/>
            <person name="Planyavsky M."/>
            <person name="Kaupe I."/>
            <person name="Breitwieser F.P."/>
            <person name="Buerckstuemmer T."/>
            <person name="Bennett K.L."/>
            <person name="Superti-Furga G."/>
            <person name="Colinge J."/>
        </authorList>
    </citation>
    <scope>IDENTIFICATION BY MASS SPECTROMETRY [LARGE SCALE ANALYSIS]</scope>
</reference>
<reference key="19">
    <citation type="journal article" date="2011" name="Nature">
        <title>GlcNAcylation of histone H2B facilitates its monoubiquitination.</title>
        <authorList>
            <person name="Fujiki R."/>
            <person name="Hashiba W."/>
            <person name="Sekine H."/>
            <person name="Yokoyama A."/>
            <person name="Chikanishi T."/>
            <person name="Ito S."/>
            <person name="Imai Y."/>
            <person name="Kim J."/>
            <person name="He H.H."/>
            <person name="Igarashi K."/>
            <person name="Kanno J."/>
            <person name="Ohtake F."/>
            <person name="Kitagawa H."/>
            <person name="Roeder R.G."/>
            <person name="Brown M."/>
            <person name="Kato S."/>
        </authorList>
    </citation>
    <scope>FUNCTION</scope>
</reference>
<reference key="20">
    <citation type="journal article" date="2011" name="Proc. Natl. Acad. Sci. U.S.A.">
        <title>Crosstalk between O-GlcNAcylation and proteolytic cleavage regulates the host cell factor-1 maturation pathway.</title>
        <authorList>
            <person name="Daou S."/>
            <person name="Mashtalir N."/>
            <person name="Hammond-Martel I."/>
            <person name="Pak H."/>
            <person name="Yu H."/>
            <person name="Sui G."/>
            <person name="Vogel J.L."/>
            <person name="Kristie T.M."/>
            <person name="Affar E.B."/>
        </authorList>
    </citation>
    <scope>FUNCTION</scope>
    <scope>CATALYTIC ACTIVITY</scope>
    <scope>SUBCELLULAR LOCATION</scope>
    <scope>UBIQUITINATION</scope>
</reference>
<reference key="21">
    <citation type="journal article" date="2012" name="Proc. Natl. Acad. Sci. U.S.A.">
        <title>N-terminal acetylome analyses and functional insights of the N-terminal acetyltransferase NatB.</title>
        <authorList>
            <person name="Van Damme P."/>
            <person name="Lasa M."/>
            <person name="Polevoda B."/>
            <person name="Gazquez C."/>
            <person name="Elosegui-Artola A."/>
            <person name="Kim D.S."/>
            <person name="De Juan-Pardo E."/>
            <person name="Demeyer K."/>
            <person name="Hole K."/>
            <person name="Larrea E."/>
            <person name="Timmerman E."/>
            <person name="Prieto J."/>
            <person name="Arnesen T."/>
            <person name="Sherman F."/>
            <person name="Gevaert K."/>
            <person name="Aldabe R."/>
        </authorList>
    </citation>
    <scope>ACETYLATION [LARGE SCALE ANALYSIS] AT ALA-2</scope>
    <scope>CLEAVAGE OF INITIATOR METHIONINE [LARGE SCALE ANALYSIS]</scope>
    <scope>IDENTIFICATION BY MASS SPECTROMETRY [LARGE SCALE ANALYSIS]</scope>
</reference>
<reference key="22">
    <citation type="journal article" date="2012" name="Science">
        <title>Phosphofructokinase 1 glycosylation regulates cell growth and metabolism.</title>
        <authorList>
            <person name="Yi W."/>
            <person name="Clark P.M."/>
            <person name="Mason D.E."/>
            <person name="Keenan M.C."/>
            <person name="Hill C."/>
            <person name="Goddard W.A. III"/>
            <person name="Peters E.C."/>
            <person name="Driggers E.M."/>
            <person name="Hsieh-Wilson L.C."/>
        </authorList>
    </citation>
    <scope>FUNCTION</scope>
</reference>
<reference key="23">
    <citation type="journal article" date="2013" name="EMBO J.">
        <title>TET2 and TET3 regulate GlcNAcylation and H3K4 methylation through OGT and SET1/COMPASS.</title>
        <authorList>
            <person name="Deplus R."/>
            <person name="Delatte B."/>
            <person name="Schwinn M.K."/>
            <person name="Defrance M."/>
            <person name="Mendez J."/>
            <person name="Murphy N."/>
            <person name="Dawson M.A."/>
            <person name="Volkmar M."/>
            <person name="Putmans P."/>
            <person name="Calonne E."/>
            <person name="Shih A.H."/>
            <person name="Levine R.L."/>
            <person name="Bernard O."/>
            <person name="Mercher T."/>
            <person name="Solary E."/>
            <person name="Urh M."/>
            <person name="Daniels D.L."/>
            <person name="Fuks F."/>
        </authorList>
    </citation>
    <scope>FUNCTION</scope>
    <scope>INTERACTION WITH TET2 AND TET3</scope>
</reference>
<reference key="24">
    <citation type="journal article" date="2013" name="J. Biol. Chem.">
        <title>Mixed lineage leukemia 5 (MLL5) protein regulates cell cycle progression and E2F1-responsive gene expression via association with host cell factor-1 (HCF-1).</title>
        <authorList>
            <person name="Zhou P."/>
            <person name="Wang Z."/>
            <person name="Yuan X."/>
            <person name="Zhou C."/>
            <person name="Liu L."/>
            <person name="Wan X."/>
            <person name="Zhang F."/>
            <person name="Ding X."/>
            <person name="Wang C."/>
            <person name="Xiong S."/>
            <person name="Wang Z."/>
            <person name="Yuan J."/>
            <person name="Li Q."/>
            <person name="Zhang Y."/>
        </authorList>
    </citation>
    <scope>INTERACTION WITH KMT2E</scope>
</reference>
<reference key="25">
    <citation type="journal article" date="2013" name="J. Proteome Res.">
        <title>Toward a comprehensive characterization of a human cancer cell phosphoproteome.</title>
        <authorList>
            <person name="Zhou H."/>
            <person name="Di Palma S."/>
            <person name="Preisinger C."/>
            <person name="Peng M."/>
            <person name="Polat A.N."/>
            <person name="Heck A.J."/>
            <person name="Mohammed S."/>
        </authorList>
    </citation>
    <scope>PHOSPHORYLATION [LARGE SCALE ANALYSIS] AT SER-20</scope>
    <scope>IDENTIFICATION BY MASS SPECTROMETRY [LARGE SCALE ANALYSIS]</scope>
    <source>
        <tissue>Erythroleukemia</tissue>
    </source>
</reference>
<reference key="26">
    <citation type="journal article" date="2013" name="Nature">
        <title>TET2 promotes histone O-GlcNAcylation during gene transcription.</title>
        <authorList>
            <person name="Chen Q."/>
            <person name="Chen Y."/>
            <person name="Bian C."/>
            <person name="Fujiki R."/>
            <person name="Yu X."/>
        </authorList>
    </citation>
    <scope>FUNCTION</scope>
    <scope>INTERACTION WITH TET2 AND TET3</scope>
</reference>
<reference key="27">
    <citation type="journal article" date="2014" name="Cell">
        <title>Glucose regulates mitochondrial motility via Milton modification by O-GlcNAc transferase.</title>
        <authorList>
            <person name="Pekkurnaz G."/>
            <person name="Trinidad J.C."/>
            <person name="Wang X."/>
            <person name="Kong D."/>
            <person name="Schwarz T.L."/>
        </authorList>
    </citation>
    <scope>INTERACTION WITH KIF5B; RHOT1; RHOT2 AND TRAK1</scope>
</reference>
<reference key="28">
    <citation type="journal article" date="2014" name="J. Biol. Chem.">
        <title>Cross-talk between two essential nutrient-sensitive enzymes: O-GlcNAc transferase (OGT) and AMP-activated protein kinase (AMPK).</title>
        <authorList>
            <person name="Bullen J.W."/>
            <person name="Balsbaugh J.L."/>
            <person name="Chanda D."/>
            <person name="Shabanowitz J."/>
            <person name="Hunt D.F."/>
            <person name="Neumann D."/>
            <person name="Hart G.W."/>
        </authorList>
    </citation>
    <scope>FUNCTION</scope>
    <scope>CATALYTIC ACTIVITY</scope>
    <scope>PHOSPHORYLATION AT THR-454</scope>
    <scope>MUTAGENESIS OF THR-454</scope>
</reference>
<reference key="29">
    <citation type="journal article" date="2014" name="Proc. Natl. Acad. Sci. U.S.A.">
        <title>O-GlcNAcylation regulates EZH2 protein stability and function.</title>
        <authorList>
            <person name="Chu C.S."/>
            <person name="Lo P.W."/>
            <person name="Yeh Y.H."/>
            <person name="Hsu P.H."/>
            <person name="Peng S.H."/>
            <person name="Teng Y.C."/>
            <person name="Kang M.L."/>
            <person name="Wong C.H."/>
            <person name="Juan L.J."/>
        </authorList>
    </citation>
    <scope>FUNCTION</scope>
</reference>
<reference key="30">
    <citation type="journal article" date="2015" name="PLoS ONE">
        <title>Mixed lineage leukemia 5 (MLL5) protein stability is cooperatively regulated by O-GlcNac transferase (OGT) and ubiquitin specific protease 7 (USP7).</title>
        <authorList>
            <person name="Ding X."/>
            <person name="Jiang W."/>
            <person name="Zhou P."/>
            <person name="Liu L."/>
            <person name="Wan X."/>
            <person name="Yuan X."/>
            <person name="Wang X."/>
            <person name="Chen M."/>
            <person name="Chen J."/>
            <person name="Yang J."/>
            <person name="Kong C."/>
            <person name="Li B."/>
            <person name="Peng C."/>
            <person name="Wong C.C."/>
            <person name="Hou F."/>
            <person name="Zhang Y."/>
        </authorList>
    </citation>
    <scope>FUNCTION</scope>
    <scope>CATALYTIC ACTIVITY</scope>
    <scope>IDENTIFICATION IN A COMPLEX WITH KMT2E AND USP7</scope>
    <scope>INTERACTION WITH KMT2E AND USP7</scope>
    <scope>SUBCELLULAR LOCATION</scope>
    <scope>ACTIVE SITE</scope>
    <scope>MUTAGENESIS OF HIS-508 AND HIS-568</scope>
</reference>
<reference key="31">
    <citation type="journal article" date="2016" name="Glycobiology">
        <title>Identification and biological consequences of the O-GlcNAc modification of the human innate immune receptor, Nod2.</title>
        <authorList>
            <person name="Hou C.W."/>
            <person name="Mohanan V."/>
            <person name="Zachara N.E."/>
            <person name="Grimes C.L."/>
        </authorList>
    </citation>
    <scope>FUNCTION</scope>
    <scope>CATALYTIC ACTIVITY</scope>
</reference>
<reference key="32">
    <citation type="journal article" date="2016" name="Oncotarget">
        <title>O-GlcNAcylation of ATG4B positively regulates autophagy by increasing its hydroxylase activity.</title>
        <authorList>
            <person name="Jo Y.K."/>
            <person name="Park N.Y."/>
            <person name="Park S.J."/>
            <person name="Kim B.G."/>
            <person name="Shin J.H."/>
            <person name="Jo D.S."/>
            <person name="Bae D.J."/>
            <person name="Suh Y.A."/>
            <person name="Chang J.H."/>
            <person name="Lee E.K."/>
            <person name="Kim S.Y."/>
            <person name="Kim J.C."/>
            <person name="Cho D.H."/>
        </authorList>
    </citation>
    <scope>FUNCTION</scope>
</reference>
<reference key="33">
    <citation type="journal article" date="2016" name="Sci. Rep.">
        <title>Identification of the nuclear localisation signal of O-GlcNAc transferase and its nuclear import regulation.</title>
        <authorList>
            <person name="Seo H.G."/>
            <person name="Kim H.B."/>
            <person name="Kang M.J."/>
            <person name="Ryum J.H."/>
            <person name="Yi E.C."/>
            <person name="Cho J.W."/>
        </authorList>
    </citation>
    <scope>FUNCTION</scope>
    <scope>CATALYTIC ACTIVITY</scope>
    <scope>PATHWAY</scope>
    <scope>SUBCELLULAR LOCATION</scope>
    <scope>GLYCOSYLATION AT SER-399</scope>
    <scope>MUTAGENESIS OF 208-TRP--ILE-211; SER-391; THR-393; SER-399 AND THR-404</scope>
</reference>
<reference key="34">
    <citation type="journal article" date="2017" name="PLoS Pathog.">
        <title>Hijacking of the O-GlcNAcZYME complex by the HTLV-1 Tax oncoprotein facilitates viral transcription.</title>
        <authorList>
            <person name="Groussaud D."/>
            <person name="Khair M."/>
            <person name="Tollenaere A.I."/>
            <person name="Waast L."/>
            <person name="Kuo M.S."/>
            <person name="Mangeney M."/>
            <person name="Martella C."/>
            <person name="Fardini Y."/>
            <person name="Coste S."/>
            <person name="Souidi M."/>
            <person name="Benit L."/>
            <person name="Pique C."/>
            <person name="Issad T."/>
        </authorList>
    </citation>
    <scope>INTERACTION WITH HUMAN T-CELL LEUKEMIA VIRUS 1/HTLV-1 PROTEIN TAX</scope>
</reference>
<reference key="35">
    <citation type="journal article" date="2019" name="Cell Rep.">
        <title>Post-translational regulation of FNIP1 creates a rheostat for the molecular chaperone Hsp90.</title>
        <authorList>
            <person name="Sager R.A."/>
            <person name="Woodford M.R."/>
            <person name="Backe S.J."/>
            <person name="Makedon A.M."/>
            <person name="Baker-Williams A.J."/>
            <person name="DiGregorio B.T."/>
            <person name="Loiselle D.R."/>
            <person name="Haystead T.A."/>
            <person name="Zachara N.E."/>
            <person name="Prodromou C."/>
            <person name="Bourboulia D."/>
            <person name="Schmidt L.S."/>
            <person name="Linehan W.M."/>
            <person name="Bratslavsky G."/>
            <person name="Mollapour M."/>
        </authorList>
    </citation>
    <scope>FUNCTION</scope>
    <scope>CATALYTIC ACTIVITY</scope>
</reference>
<reference key="36">
    <citation type="journal article" date="2019" name="J. Biol. Chem.">
        <title>O-GlcNAcylation of Thr12/Ser56 in short-form O-GlcNAc transferase (sOGT) regulates its substrate selectivity.</title>
        <authorList>
            <person name="Liu L."/>
            <person name="Li L."/>
            <person name="Ma C."/>
            <person name="Shi Y."/>
            <person name="Liu C."/>
            <person name="Xiao Z."/>
            <person name="Zhang Y."/>
            <person name="Tian F."/>
            <person name="Gao Y."/>
            <person name="Zhang J."/>
            <person name="Ying W."/>
            <person name="Wang P.G."/>
            <person name="Zhang L."/>
        </authorList>
    </citation>
    <scope>FUNCTION (ISOFORM 4)</scope>
    <scope>CATALYTIC ACTIVITY (ISOFORM 4)</scope>
    <scope>GLYCOSYLATION AT SER-10; THR-12; SER-18; THR-38; SER-52 AND SER-56 (ISOFORM 4)</scope>
    <scope>MUTAGENESIS OF SER-10; THR-12; SER-18; THR-38; SER-52; SER-56 AND HIS-127 (ISOFORM 4)</scope>
</reference>
<reference key="37">
    <citation type="journal article" date="2021" name="Proc. Natl. Acad. Sci. U.S.A.">
        <title>Interaction hot spots for phase separation revealed by NMR studies of a CAPRIN1 condensed phase.</title>
        <authorList>
            <person name="Kim T.H."/>
            <person name="Payliss B.J."/>
            <person name="Nosella M.L."/>
            <person name="Lee I.T.W."/>
            <person name="Toyama Y."/>
            <person name="Forman-Kay J.D."/>
            <person name="Kay L.E."/>
        </authorList>
    </citation>
    <scope>FUNCTION</scope>
    <scope>CATALYTIC ACTIVITY</scope>
</reference>
<reference key="38">
    <citation type="journal article" date="2022" name="Life. Sci Alliance">
        <title>PROSER1 mediates TET2 O-GlcNAcylation to regulate DNA demethylation on UTX-dependent enhancers and CpG islands.</title>
        <authorList>
            <person name="Wang X."/>
            <person name="Rosikiewicz W."/>
            <person name="Sedkov Y."/>
            <person name="Martinez T."/>
            <person name="Hansen B.S."/>
            <person name="Schreiner P."/>
            <person name="Christensen J."/>
            <person name="Xu B."/>
            <person name="Pruett-Miller S.M."/>
            <person name="Helin K."/>
            <person name="Herz H.M."/>
        </authorList>
    </citation>
    <scope>FUNCTION</scope>
    <scope>INTERACTION WITH PROSER1</scope>
</reference>
<reference key="39">
    <citation type="journal article" date="2023" name="Mol. Cell">
        <title>O-GlcNAcylation of Raptor transduces glucose signals to mTORC1.</title>
        <authorList>
            <person name="Xu C."/>
            <person name="Pan X."/>
            <person name="Wang D."/>
            <person name="Guan Y."/>
            <person name="Yang W."/>
            <person name="Chen X."/>
            <person name="Liu Y."/>
        </authorList>
    </citation>
    <scope>FUNCTION</scope>
    <scope>CATALYTIC ACTIVITY</scope>
    <scope>PATHWAY</scope>
    <scope>SUBUNIT</scope>
    <scope>PHOSPHORYLATION AT THR-454</scope>
    <scope>MUTAGENESIS OF THR-454 AND 461-ASP--PRO-463</scope>
</reference>
<reference key="40">
    <citation type="journal article" date="2024" name="Inflamm. Res.">
        <title>O-GlcNAc modification of GSDMD attenuates LPS-induced endothelial cells pyroptosis.</title>
        <authorList>
            <person name="Yu F."/>
            <person name="Zhang Z."/>
            <person name="Leng Y."/>
            <person name="Chen A.F."/>
        </authorList>
    </citation>
    <scope>FUNCTION</scope>
</reference>
<reference key="41">
    <citation type="journal article" date="2025" name="Nat. Commun.">
        <title>FBXO31-mediated ubiquitination of OGT maintains O-GlcNAcylation homeostasis to restrain endometrial malignancy.</title>
        <authorList>
            <person name="Zhang N."/>
            <person name="Meng Y."/>
            <person name="Mao S."/>
            <person name="Ni H."/>
            <person name="Huang C."/>
            <person name="Shen L."/>
            <person name="Fu K."/>
            <person name="Lv L."/>
            <person name="Yu C."/>
            <person name="Meekrathok P."/>
            <person name="Kuang C."/>
            <person name="Chen F."/>
            <person name="Zhang Y."/>
            <person name="Yuan K."/>
        </authorList>
    </citation>
    <scope>UBIQUITINATION</scope>
</reference>
<reference key="42">
    <citation type="journal article" date="2004" name="Nat. Struct. Mol. Biol.">
        <title>The superhelical TPR-repeat domain of O-linked GlcNAc transferase exhibits structural similarities to importin alpha.</title>
        <authorList>
            <person name="Jinek M."/>
            <person name="Rehwinkel J."/>
            <person name="Lazarus B.D."/>
            <person name="Izaurralde E."/>
            <person name="Hanover J.A."/>
            <person name="Conti E."/>
        </authorList>
    </citation>
    <scope>X-RAY CRYSTALLOGRAPHY (2.85 ANGSTROMS) OF 26-400</scope>
    <scope>FUNCTION</scope>
    <scope>CATALYTIC ACTIVITY</scope>
    <scope>DOMAIN</scope>
    <scope>MUTAGENESIS OF TRP-208 AND ILE-211</scope>
</reference>
<reference key="43">
    <citation type="journal article" date="2011" name="Nature">
        <title>Structure of human O-GlcNAc transferase and its complex with a peptide substrate.</title>
        <authorList>
            <person name="Lazarus M.B."/>
            <person name="Nam Y."/>
            <person name="Jiang J."/>
            <person name="Sliz P."/>
            <person name="Walker S."/>
        </authorList>
    </citation>
    <scope>X-RAY CRYSTALLOGRAPHY (1.95 ANGSTROMS) OF 323-1041 IN COMPLEXES WITH UDP AND PEPTIDE SUBSTRATE</scope>
    <scope>FUNCTION</scope>
    <scope>CATALYTIC ACTIVITY</scope>
    <scope>ACTIVITY REGULATION</scope>
    <scope>BIOPHYSICOCHEMICAL PROPERTIES</scope>
    <scope>SUBUNIT</scope>
    <scope>ACTIVE SITE</scope>
    <scope>MUTAGENESIS OF HIS-508; HIS-568 AND HIS-911</scope>
</reference>
<reference evidence="54 55 56 57 58" key="44">
    <citation type="journal article" date="2012" name="Nat. Chem. Biol.">
        <title>Structural snapshots of the reaction coordinate for O-GlcNAc transferase.</title>
        <authorList>
            <person name="Lazarus M.B."/>
            <person name="Jiang J."/>
            <person name="Gloster T.M."/>
            <person name="Zandberg W.F."/>
            <person name="Whitworth G.E."/>
            <person name="Vocadlo D.J."/>
            <person name="Walker S."/>
        </authorList>
    </citation>
    <scope>X-RAY CRYSTALLOGRAPHY (1.70 ANGSTROMS) OF 323-1041 IN COMPLEXES WITH UDP; PEPTIDE SUBSTRATE; SUBSTRATE ANALOGS; PRODUCT AND PRODUCT ANALOG</scope>
    <scope>FUNCTION</scope>
    <scope>CATALYTIC ACTIVITY</scope>
    <scope>PATHWAY</scope>
    <scope>SUBSTRATE SPECIFICITY</scope>
    <scope>REACTION MECHANISM</scope>
</reference>
<reference evidence="59 60 61 62" key="45">
    <citation type="journal article" date="2015" name="Nat. Struct. Mol. Biol.">
        <title>The active site of O-GlcNAc transferase imposes constraints on substrate sequence.</title>
        <authorList>
            <person name="Pathak S."/>
            <person name="Alonso J."/>
            <person name="Schimpl M."/>
            <person name="Rafie K."/>
            <person name="Blair D.E."/>
            <person name="Borodkin V.S."/>
            <person name="Albarbarawi O."/>
            <person name="van Aalten D.M.F."/>
        </authorList>
    </citation>
    <scope>X-RAY CRYSTALLOGRAPHY (2.05 ANGSTROMS) OF 323-1041 IN COMPLEX WITH PEPTIDE SUBSTRATES</scope>
    <scope>FUNCTION</scope>
    <scope>CATALYTIC ACTIVITY</scope>
</reference>
<reference key="46">
    <citation type="journal article" date="2015" name="Clin. Case Rep.">
        <title>Nonsyndromic X-linked intellectual deficiency in three brothers with a novel MED12 missense mutation [c.5922G&gt;T (p.Glu1974His)].</title>
        <authorList>
            <person name="Bouazzi H."/>
            <person name="Lesca G."/>
            <person name="Trujillo C."/>
            <person name="Alwasiyah M.K."/>
            <person name="Munnich A."/>
        </authorList>
    </citation>
    <scope>VARIANT XLID106 THR-319</scope>
</reference>
<reference key="47">
    <citation type="journal article" date="2017" name="J. Biol. Chem.">
        <title>Identification and characterization of a missense mutation in the O-linked beta-N-acetylglucosamine (O-GlcNAc) transferase gene that segregates with X-linked intellectual disability.</title>
        <authorList>
            <person name="Vaidyanathan K."/>
            <person name="Niranjan T."/>
            <person name="Selvan N."/>
            <person name="Teo C.F."/>
            <person name="May M."/>
            <person name="Patel S."/>
            <person name="Weatherly B."/>
            <person name="Skinner C."/>
            <person name="Opitz J."/>
            <person name="Carey J."/>
            <person name="Viskochil D."/>
            <person name="Gecz J."/>
            <person name="Shaw M."/>
            <person name="Peng Y."/>
            <person name="Alexov E."/>
            <person name="Wang T."/>
            <person name="Schwartz C."/>
            <person name="Wells L."/>
        </authorList>
    </citation>
    <scope>VARIANT XLID106 PHE-254</scope>
    <scope>CHARACTERIZATION OF VARIANT XLID106 PHE-254</scope>
    <scope>FUNCTION</scope>
</reference>
<reference key="48">
    <citation type="journal article" date="2017" name="J. Biol. Chem.">
        <title>Mutations in N-acetylglucosamine (O-GlcNAc) transferase in patients with X-linked intellectual disability.</title>
        <authorList>
            <person name="Willems A.P."/>
            <person name="Gundogdu M."/>
            <person name="Kempers M.J.E."/>
            <person name="Giltay J.C."/>
            <person name="Pfundt R."/>
            <person name="Elferink M."/>
            <person name="Loza B.F."/>
            <person name="Fuijkschot J."/>
            <person name="Ferenbach A.T."/>
            <person name="van Gassen K.L.I."/>
            <person name="van Aalten D.M.F."/>
            <person name="Lefeber D.J."/>
        </authorList>
    </citation>
    <scope>VARIANT XLID106 PRO-284</scope>
    <scope>CHARACTERIZATION OF VARIANT XLID106 PRO-284</scope>
    <scope>FUNCTION</scope>
</reference>
<proteinExistence type="evidence at protein level"/>
<comment type="function">
    <text evidence="1 2 4 5 8 9 10 11 13 14 15 16 17 19 22 23 25 27 28 29 31 32 34 36 37 38 39">Catalyzes the transfer of a single N-acetylglucosamine from UDP-GlcNAc to a serine or threonine residue in cytoplasmic and nuclear proteins resulting in their modification with a beta-linked N-acetylglucosamine (O-GlcNAc) (PubMed:12150998, PubMed:15361863, PubMed:19451179, PubMed:20018868, PubMed:21240259, PubMed:21285374, PubMed:23103939, PubMed:26237509, PubMed:26369908, PubMed:26678539, PubMed:27713473, PubMed:37541260, PubMed:37962578). Glycosylates a large and diverse number of proteins including histone H2B, AKT1, AMPK, ATG4B, CAPRIN1, EZH2, FNIP1, GSDMD, KRT7, LMNA, LMNB1, LMNB2, RPTOR, HOXA1, PFKL, KMT2E/MLL5, MAPT/TAU, TET2, RBL2, RET, NOD2 and HCFC1 (PubMed:19451179, PubMed:20200153, PubMed:21285374, PubMed:22923583, PubMed:23353889, PubMed:24474760, PubMed:26237509, PubMed:26369908, PubMed:26678539, PubMed:27527864, PubMed:30699359, PubMed:34074792, PubMed:34667079, PubMed:37541260, PubMed:37962578). Can regulate their cellular processes via cross-talk between glycosylation and phosphorylation or by affecting proteolytic processing (PubMed:21285374). Involved in insulin resistance in muscle and adipocyte cells via glycosylating insulin signaling components and inhibiting the 'Thr-308' phosphorylation of AKT1, enhancing IRS1 phosphorylation and attenuating insulin signaling (By similarity). Involved in glycolysis regulation by mediating glycosylation of 6-phosphofructokinase PFKL, inhibiting its activity (PubMed:22923583). Plays a key role in chromatin structure by mediating O-GlcNAcylation of 'Ser-112' of histone H2B: recruited to CpG-rich transcription start sites of active genes via its interaction with TET proteins (TET1, TET2 or TET3) (PubMed:22121020, PubMed:23353889). As part of the NSL complex indirectly involved in acetylation of nucleosomal histone H4 on several lysine residues (PubMed:20018852). O-GlcNAcylation of 'Ser-75' of EZH2 increases its stability, and facilitating the formation of H3K27me3 by the PRC2/EED-EZH2 complex (PubMed:24474760). Stabilizes KMT2E/MLL5 by mediating its glycosylation, thereby preventing KMT2E/MLL5 ubiquitination (PubMed:26678539). Regulates circadian oscillation of the clock genes and glucose homeostasis in the liver (By similarity). Stabilizes clock proteins BMAL1 and CLOCK through O-glycosylation, which prevents their ubiquitination and subsequent degradation (By similarity). Promotes the CLOCK-BMAL1-mediated transcription of genes in the negative loop of the circadian clock such as PER1/2 and CRY1/2. O-glycosylates HCFC1 and regulates its proteolytic processing and transcriptional activity (PubMed:21285374, PubMed:28302723, PubMed:28584052). Component of a THAP1/THAP3-HCFC1-OGT complex that is required for the regulation of the transcriptional activity of RRM1 (PubMed:20200153). Regulates mitochondrial motility in neurons by mediating glycosylation of TRAK1 (By similarity). Promotes autophagy by mediating O-glycosylation of ATG4B (PubMed:27527864). Acts as a regulator of mTORC1 signaling by mediating O-glycosylation of RPTOR and FNIP1: O-GlcNAcylation of RPTOR in response to glucose sufficiency promotes activation of the mTORC1 complex (PubMed:30699359, PubMed:37541260).</text>
</comment>
<comment type="function">
    <molecule>Isoform 2</molecule>
    <text evidence="12">The mitochondrial isoform (mOGT) is cytotoxic and triggers apoptosis in several cell types including INS1, an insulinoma cell line.</text>
</comment>
<comment type="function">
    <molecule>Isoform 4</molecule>
    <text evidence="35">Has N-acetylglucosaminyltransferase activity: glycosylates proteins, such as HNRNPU, NEUROD1, NUP62 and PDCD6IP (PubMed:31527085). Displays specific substrate selectivity compared to other isoforms (PubMed:31527085).</text>
</comment>
<comment type="catalytic activity">
    <reaction evidence="5 13 14 17 23 25 30 34 36 51 52">
        <text>L-seryl-[protein] + UDP-N-acetyl-alpha-D-glucosamine = 3-O-(N-acetyl-beta-D-glucosaminyl)-L-seryl-[protein] + UDP + H(+)</text>
        <dbReference type="Rhea" id="RHEA:48904"/>
        <dbReference type="Rhea" id="RHEA-COMP:9863"/>
        <dbReference type="Rhea" id="RHEA-COMP:12251"/>
        <dbReference type="ChEBI" id="CHEBI:15378"/>
        <dbReference type="ChEBI" id="CHEBI:29999"/>
        <dbReference type="ChEBI" id="CHEBI:57705"/>
        <dbReference type="ChEBI" id="CHEBI:58223"/>
        <dbReference type="ChEBI" id="CHEBI:90838"/>
        <dbReference type="EC" id="2.4.1.255"/>
    </reaction>
    <physiologicalReaction direction="left-to-right" evidence="23 25 30 34 36">
        <dbReference type="Rhea" id="RHEA:48905"/>
    </physiologicalReaction>
</comment>
<comment type="catalytic activity">
    <reaction evidence="5 13 14 23 25 38 52">
        <text>L-threonyl-[protein] + UDP-N-acetyl-alpha-D-glucosamine = 3-O-(N-acetyl-beta-D-glucosaminyl)-L-threonyl-[protein] + UDP + H(+)</text>
        <dbReference type="Rhea" id="RHEA:48908"/>
        <dbReference type="Rhea" id="RHEA-COMP:11060"/>
        <dbReference type="Rhea" id="RHEA-COMP:12252"/>
        <dbReference type="ChEBI" id="CHEBI:15378"/>
        <dbReference type="ChEBI" id="CHEBI:30013"/>
        <dbReference type="ChEBI" id="CHEBI:57705"/>
        <dbReference type="ChEBI" id="CHEBI:58223"/>
        <dbReference type="ChEBI" id="CHEBI:90840"/>
        <dbReference type="EC" id="2.4.1.255"/>
    </reaction>
    <physiologicalReaction direction="left-to-right" evidence="23 25 30 38">
        <dbReference type="Rhea" id="RHEA:48909"/>
    </physiologicalReaction>
</comment>
<comment type="catalytic activity">
    <molecule>Isoform 4</molecule>
    <reaction evidence="35">
        <text>L-seryl-[protein] + UDP-N-acetyl-alpha-D-glucosamine = 3-O-(N-acetyl-beta-D-glucosaminyl)-L-seryl-[protein] + UDP + H(+)</text>
        <dbReference type="Rhea" id="RHEA:48904"/>
        <dbReference type="Rhea" id="RHEA-COMP:9863"/>
        <dbReference type="Rhea" id="RHEA-COMP:12251"/>
        <dbReference type="ChEBI" id="CHEBI:15378"/>
        <dbReference type="ChEBI" id="CHEBI:29999"/>
        <dbReference type="ChEBI" id="CHEBI:57705"/>
        <dbReference type="ChEBI" id="CHEBI:58223"/>
        <dbReference type="ChEBI" id="CHEBI:90838"/>
        <dbReference type="EC" id="2.4.1.255"/>
    </reaction>
    <physiologicalReaction direction="left-to-right" evidence="35">
        <dbReference type="Rhea" id="RHEA:48905"/>
    </physiologicalReaction>
</comment>
<comment type="catalytic activity">
    <molecule>Isoform 4</molecule>
    <reaction evidence="35">
        <text>L-threonyl-[protein] + UDP-N-acetyl-alpha-D-glucosamine = 3-O-(N-acetyl-beta-D-glucosaminyl)-L-threonyl-[protein] + UDP + H(+)</text>
        <dbReference type="Rhea" id="RHEA:48908"/>
        <dbReference type="Rhea" id="RHEA-COMP:11060"/>
        <dbReference type="Rhea" id="RHEA-COMP:12252"/>
        <dbReference type="ChEBI" id="CHEBI:15378"/>
        <dbReference type="ChEBI" id="CHEBI:30013"/>
        <dbReference type="ChEBI" id="CHEBI:57705"/>
        <dbReference type="ChEBI" id="CHEBI:58223"/>
        <dbReference type="ChEBI" id="CHEBI:90840"/>
        <dbReference type="EC" id="2.4.1.255"/>
    </reaction>
    <physiologicalReaction direction="left-to-right" evidence="35">
        <dbReference type="Rhea" id="RHEA:48909"/>
    </physiologicalReaction>
</comment>
<comment type="activity regulation">
    <text evidence="13">Subject to product inhibition by UDP.</text>
</comment>
<comment type="biophysicochemical properties">
    <kinetics>
        <KM evidence="13">1.8 uM for UDP-N-acetyl-D-glucosamine</KM>
    </kinetics>
</comment>
<comment type="pathway">
    <text evidence="5 13 14 17 28 30 35 38">Protein modification; protein glycosylation.</text>
</comment>
<comment type="subunit">
    <text evidence="1 2 4 9 11 13 18 19 20 24 28 37">Monomer; may exist in different oligomerization states in cells (PubMed:21240259, PubMed:27713473). Homotrimer, oligomerizes via TPR repeats 6 and 7. Trimerization is not necessary for activity in vitro, however it increases affinity for UDP-GlcNAc (By similarity). Component of a THAP1/THAP3-HCFC1-OGT complex (PubMed:12670868, PubMed:20200153). Component of the NSL complex at least composed of MOF/KAT8, KANSL1, KANSL2, KANSL3, MCRS1, PHF20, OGT1/OGT, WDR5 and HCFC1 (PubMed:20018852). Found in a complex with KIF5B, RHOT1, RHOT2 and TRAK1 (PubMed:24995978). Found in a complex composed of at least SINHCAF, SIN3A, HDAC1, SAP30, RBBP4, OGT and TET1. Component of a complex composed of KMT2E/MLL5 (isoform 3), OGT (isoform 1) and USP7; the complex stabilizes KMT2E/MLL5, preventing KMT2E/MLL5 ubiquitination and proteasomal-mediated degradation (PubMed:23629655, PubMed:26678539). Interacts (via TPRs 1-6) with SIN3A; the interaction mediates transcriptional repression in parallel with histone deacetylase (PubMed:12150998). Interacts (via TPR 5-6) with TET1, TET2 and TET3 (PubMed:23222540, PubMed:23353889). Interacts (via TPR repeats 6 and 7) with ATXN10 (By similarity). Interacts with NSD2 (By similarity). Interacts with PROSER1; this interaction mediates TET2 O-GlcNAcylation and stability by promoting the interaction between OGT and TET2 (PubMed:34667079).</text>
</comment>
<comment type="subunit">
    <molecule>Isoform 1</molecule>
    <text evidence="28">Interacts with USP7.</text>
</comment>
<comment type="subunit">
    <text evidence="33">(Microbial infection) Interacts with human T-cell leukemia virus 1/HTLV-1 protein Tax; this interaction increases Tax interacting partner CREB1 O-GlcNAcylation.</text>
</comment>
<comment type="interaction">
    <interactant intactId="EBI-539828">
        <id>O15294</id>
    </interactant>
    <interactant intactId="EBI-396176">
        <id>P51610</id>
        <label>HCFC1</label>
    </interactant>
    <organismsDiffer>false</organismsDiffer>
    <experiments>10</experiments>
</comment>
<comment type="interaction">
    <interactant intactId="EBI-539828">
        <id>O15294</id>
    </interactant>
    <interactant intactId="EBI-6907210">
        <id>O95644</id>
        <label>NFATC1</label>
    </interactant>
    <organismsDiffer>false</organismsDiffer>
    <experiments>2</experiments>
</comment>
<comment type="interaction">
    <interactant intactId="EBI-539828">
        <id>O15294</id>
    </interactant>
    <interactant intactId="EBI-751933">
        <id>Q9H1M0</id>
        <label>NUP62CL</label>
    </interactant>
    <organismsDiffer>false</organismsDiffer>
    <experiments>7</experiments>
</comment>
<comment type="interaction">
    <interactant intactId="EBI-539828">
        <id>O15294</id>
    </interactant>
    <interactant intactId="EBI-1223801">
        <id>Q8NDX5</id>
        <label>PHC3</label>
    </interactant>
    <organismsDiffer>false</organismsDiffer>
    <experiments>3</experiments>
</comment>
<comment type="interaction">
    <interactant intactId="EBI-539828">
        <id>O15294</id>
    </interactant>
    <interactant intactId="EBI-356283">
        <id>P36873</id>
        <label>PPP1CC</label>
    </interactant>
    <organismsDiffer>false</organismsDiffer>
    <experiments>11</experiments>
</comment>
<comment type="interaction">
    <interactant intactId="EBI-539828">
        <id>O15294</id>
    </interactant>
    <interactant intactId="EBI-716740">
        <id>P11464</id>
        <label>PSG1</label>
    </interactant>
    <organismsDiffer>false</organismsDiffer>
    <experiments>3</experiments>
</comment>
<comment type="interaction">
    <interactant intactId="EBI-539828">
        <id>O15294</id>
    </interactant>
    <interactant intactId="EBI-73886">
        <id>Q04206</id>
        <label>RELA</label>
    </interactant>
    <organismsDiffer>false</organismsDiffer>
    <experiments>2</experiments>
</comment>
<comment type="interaction">
    <interactant intactId="EBI-539828">
        <id>O15294</id>
    </interactant>
    <interactant intactId="EBI-490676">
        <id>O95721</id>
        <label>SNAP29</label>
    </interactant>
    <organismsDiffer>false</organismsDiffer>
    <experiments>2</experiments>
</comment>
<comment type="interaction">
    <interactant intactId="EBI-539828">
        <id>O15294</id>
    </interactant>
    <interactant intactId="EBI-358643">
        <id>Q15750</id>
        <label>TAB1</label>
    </interactant>
    <organismsDiffer>false</organismsDiffer>
    <experiments>3</experiments>
</comment>
<comment type="interaction">
    <interactant intactId="EBI-539828">
        <id>O15294</id>
    </interactant>
    <interactant intactId="EBI-10177000">
        <id>E7EQS8</id>
        <label>TET2</label>
    </interactant>
    <organismsDiffer>false</organismsDiffer>
    <experiments>3</experiments>
</comment>
<comment type="interaction">
    <interactant intactId="EBI-539828">
        <id>O15294</id>
    </interactant>
    <interactant intactId="EBI-310727">
        <id>Q6N021</id>
        <label>TET2</label>
    </interactant>
    <organismsDiffer>false</organismsDiffer>
    <experiments>7</experiments>
</comment>
<comment type="interaction">
    <interactant intactId="EBI-539828">
        <id>O15294</id>
    </interactant>
    <interactant intactId="EBI-20717492">
        <id>Q6N021-1</id>
        <label>TET2</label>
    </interactant>
    <organismsDiffer>false</organismsDiffer>
    <experiments>5</experiments>
</comment>
<comment type="interaction">
    <interactant intactId="EBI-539828">
        <id>O15294</id>
    </interactant>
    <interactant intactId="EBI-2831148">
        <id>O43151</id>
        <label>TET3</label>
    </interactant>
    <organismsDiffer>false</organismsDiffer>
    <experiments>7</experiments>
</comment>
<comment type="interaction">
    <interactant intactId="EBI-539828">
        <id>O15294</id>
    </interactant>
    <interactant intactId="EBI-1105048">
        <id>Q9UPV9</id>
        <label>TRAK1</label>
    </interactant>
    <organismsDiffer>false</organismsDiffer>
    <experiments>3</experiments>
</comment>
<comment type="interaction">
    <interactant intactId="EBI-539828">
        <id>O15294</id>
    </interactant>
    <interactant intactId="EBI-357067">
        <id>O94763</id>
        <label>URI1</label>
    </interactant>
    <organismsDiffer>false</organismsDiffer>
    <experiments>10</experiments>
</comment>
<comment type="interaction">
    <interactant intactId="EBI-539828">
        <id>O15294</id>
    </interactant>
    <interactant intactId="EBI-12590720">
        <id>O94763-1</id>
        <label>URI1</label>
    </interactant>
    <organismsDiffer>false</organismsDiffer>
    <experiments>3</experiments>
</comment>
<comment type="interaction">
    <interactant intactId="EBI-539828">
        <id>O15294</id>
    </interactant>
    <interactant intactId="EBI-3957603">
        <id>P09022</id>
        <label>Hoxa1</label>
    </interactant>
    <organismsDiffer>true</organismsDiffer>
    <experiments>3</experiments>
</comment>
<comment type="interaction">
    <interactant intactId="EBI-539828">
        <id>O15294</id>
    </interactant>
    <interactant intactId="EBI-80049">
        <id>P63088</id>
        <label>Ppp1cc</label>
    </interactant>
    <organismsDiffer>true</organismsDiffer>
    <experiments>3</experiments>
</comment>
<comment type="interaction">
    <interactant intactId="EBI-539828">
        <id>O15294</id>
    </interactant>
    <interactant intactId="EBI-9031997">
        <id>Q8BG87</id>
        <label>Tet3</label>
    </interactant>
    <organismsDiffer>true</organismsDiffer>
    <experiments>2</experiments>
</comment>
<comment type="interaction">
    <interactant intactId="EBI-11536584">
        <id>O15294-3</id>
    </interactant>
    <interactant intactId="EBI-16439000">
        <id>A0A0S2Z5B5</id>
        <label>NUP62CL</label>
    </interactant>
    <organismsDiffer>false</organismsDiffer>
    <experiments>3</experiments>
</comment>
<comment type="interaction">
    <interactant intactId="EBI-11536584">
        <id>O15294-3</id>
    </interactant>
    <interactant intactId="EBI-751933">
        <id>Q9H1M0</id>
        <label>NUP62CL</label>
    </interactant>
    <organismsDiffer>false</organismsDiffer>
    <experiments>3</experiments>
</comment>
<comment type="interaction">
    <interactant intactId="EBI-11536584">
        <id>O15294-3</id>
    </interactant>
    <interactant intactId="EBI-751683">
        <id>Q9UHR5</id>
        <label>SAP30BP</label>
    </interactant>
    <organismsDiffer>false</organismsDiffer>
    <experiments>3</experiments>
</comment>
<comment type="interaction">
    <interactant intactId="EBI-11536584">
        <id>O15294-3</id>
    </interactant>
    <interactant intactId="EBI-4395514">
        <id>Q8N9R8</id>
        <label>SCAI</label>
    </interactant>
    <organismsDiffer>false</organismsDiffer>
    <experiments>3</experiments>
</comment>
<comment type="interaction">
    <interactant intactId="EBI-11536584">
        <id>O15294-3</id>
    </interactant>
    <interactant intactId="EBI-2555767">
        <id>Q15973</id>
        <label>ZNF124</label>
    </interactant>
    <organismsDiffer>false</organismsDiffer>
    <experiments>3</experiments>
</comment>
<comment type="subcellular location">
    <subcellularLocation>
        <location evidence="28 30">Nucleus</location>
    </subcellularLocation>
    <subcellularLocation>
        <location evidence="28 30">Cytoplasm</location>
    </subcellularLocation>
    <text evidence="28 30">Predominantly localizes to the nucleus (PubMed:26678539). Translocates into the nucleus via association with importin KPNA1 (PubMed:27713473).</text>
</comment>
<comment type="subcellular location">
    <molecule>Isoform 2</molecule>
    <subcellularLocation>
        <location evidence="12">Mitochondrion</location>
    </subcellularLocation>
    <subcellularLocation>
        <location evidence="12">Membrane</location>
    </subcellularLocation>
    <text evidence="12">Associates with the mitochondrial inner membrane.</text>
</comment>
<comment type="subcellular location">
    <molecule>Isoform 3</molecule>
    <subcellularLocation>
        <location evidence="14">Cytoplasm</location>
    </subcellularLocation>
    <subcellularLocation>
        <location evidence="9 14">Nucleus</location>
    </subcellularLocation>
    <subcellularLocation>
        <location evidence="1">Cell membrane</location>
    </subcellularLocation>
    <subcellularLocation>
        <location evidence="1">Mitochondrion membrane</location>
    </subcellularLocation>
    <subcellularLocation>
        <location evidence="1">Cell projection</location>
    </subcellularLocation>
    <text evidence="1 14">Mostly in the nucleus. Retained in the nucleus via interaction with HCFC1 (PubMed:21285374). After insulin induction, translocated from the nucleus to the cell membrane via phosphatidylinositide binding. Colocalizes with AKT1 at the plasma membrane. TRAK1 recruits this protein to mitochondria. In the absence of TRAK1, localizes in cytosol and nucleus (By similarity).</text>
</comment>
<comment type="subcellular location">
    <molecule>Isoform 4</molecule>
    <subcellularLocation>
        <location evidence="47">Cytoplasm</location>
    </subcellularLocation>
    <subcellularLocation>
        <location evidence="47">Nucleus</location>
    </subcellularLocation>
</comment>
<comment type="alternative products">
    <event type="alternative splicing"/>
    <isoform>
        <id>O15294-1</id>
        <name>3</name>
        <name evidence="47">Nucleocytoplasmic isoform</name>
        <name evidence="47">ncOGT</name>
        <sequence type="displayed"/>
    </isoform>
    <isoform>
        <id>O15294-2</id>
        <name>2</name>
        <name evidence="46">Mitochondrial isoform</name>
        <name evidence="46">mOGT</name>
        <sequence type="described" ref="VSP_006553"/>
    </isoform>
    <isoform>
        <id>O15294-3</id>
        <name>1</name>
        <sequence type="described" ref="VSP_014164"/>
    </isoform>
    <isoform>
        <id>O15294-4</id>
        <name>4</name>
        <name evidence="47">Short isoform</name>
        <name evidence="47">sOGT</name>
        <sequence type="described" ref="VSP_040764"/>
    </isoform>
</comment>
<comment type="tissue specificity">
    <text evidence="41">Highly expressed in pancreas and to a lesser extent in skeletal muscle, heart, brain and placenta. Present in trace amounts in lung and liver.</text>
</comment>
<comment type="induction">
    <molecule>Isoform 3</molecule>
    <text evidence="6">Induction of the nucleocytoplasmic OGT (ncOGT) isoform in the liver on glucose deprivation is mediated by the decreased hexosamine biosynthesis pathway (HBP) flux.</text>
</comment>
<comment type="domain">
    <text evidence="5">The TPR repeat domain is required for substrate binding and oligomerization.</text>
</comment>
<comment type="PTM">
    <text evidence="14 40">Ubiquitinated by the SCF(FBXO31) complex, leading to its proteasomal degradation.</text>
</comment>
<comment type="PTM">
    <text evidence="2 23">Phosphorylation on Ser-3 or Ser-4 by GSK3-beta positively regulates its activity (By similarity). Phosphorylation at Thr-454 by AMPK promotes nuclear localization (PubMed:24563466).</text>
</comment>
<comment type="PTM">
    <text evidence="30">Glycosylated via autocatalysis; O-GlcNAcylation at Ser-399 promotes nuclear localization.</text>
</comment>
<comment type="PTM">
    <molecule>Isoform 4</molecule>
    <text evidence="35">Glycosylated via autocatalysis; does not affect the enzyme activity but regulates substrate selectivity.</text>
</comment>
<comment type="disease">
    <text evidence="8">Regulation of OGT activity and altered O-GlcNAcylations are implicated in diabetes and Alzheimer disease. O-GlcNAcylation of AKT1 affects insulin signaling and, possibly diabetes. Reduced O-GlcNAcylations and resulting increased phosphorylations of MAPT/TAU are observed in Alzheimer disease (AD) brain cerebrum.</text>
</comment>
<comment type="disease" evidence="26 31 32">
    <disease id="DI-05009">
        <name>Intellectual developmental disorder, X-linked 106</name>
        <acronym>XLID106</acronym>
        <description>A form of intellectual disability, a disorder characterized by significantly below average general intellectual functioning associated with impairments in adaptive behavior and manifested during the developmental period. Intellectual deficiency is the only primary symptom of non-syndromic X-linked forms, while syndromic forms present with associated physical, neurological and/or psychiatric manifestations.</description>
        <dbReference type="MIM" id="300997"/>
    </disease>
    <text>The disease is caused by variants affecting the gene represented in this entry.</text>
</comment>
<comment type="similarity">
    <text evidence="49">Belongs to the glycosyltransferase 41 family. O-GlcNAc transferase subfamily.</text>
</comment>
<comment type="caution">
    <text evidence="7 21">Was originally thought to be part of the MLL5-L complex, at least composed of KMT2E, STK38, PPP1CA, PPP1CB, PPP1CC, HCFC1, ACTB and OGT (PubMed:19377461). However, the corresponding article has been retracted (PubMed:24336203).</text>
</comment>
<comment type="online information" name="Functional Glycomics Gateway - GTase">
    <link uri="http://www.functionalglycomics.org/glycomics/molecule/jsp/glycoEnzyme/viewGlycoEnzyme.jsp?gbpId=gt_hum_554"/>
    <text>UDP-N-acetylglucosamine--peptide N-acetylglucosaminyltransferase 110kDa subunit</text>
</comment>
<protein>
    <recommendedName>
        <fullName>UDP-N-acetylglucosamine--peptide N-acetylglucosaminyltransferase 110 kDa subunit</fullName>
        <ecNumber evidence="5 13 14 34 38 51 52">2.4.1.255</ecNumber>
    </recommendedName>
    <alternativeName>
        <fullName>O-GlcNAc transferase subunit p110</fullName>
    </alternativeName>
    <alternativeName>
        <fullName>O-linked N-acetylglucosamine transferase 110 kDa subunit</fullName>
        <shortName>OGT</shortName>
    </alternativeName>
</protein>
<sequence>MASSVGNVADSTEPTKRMLSFQGLAELAHREYQAGDFEAAERHCMQLWRQEPDNTGVLLLLSSIHFQCRRLDRSAHFSTLAIKQNPLLAEAYSNLGNVYKERGQLQEAIEHYRHALRLKPDFIDGYINLAAALVAAGDMEGAVQAYVSALQYNPDLYCVRSDLGNLLKALGRLEEAKACYLKAIETQPNFAVAWSNLGCVFNAQGEIWLAIHHFEKAVTLDPNFLDAYINLGNVLKEARIFDRAVAAYLRALSLSPNHAVVHGNLACVYYEQGLIDLAIDTYRRAIELQPHFPDAYCNLANALKEKGSVAEAEDCYNTALRLCPTHADSLNNLANIKREQGNIEEAVRLYRKALEVFPEFAAAHSNLASVLQQQGKLQEALMHYKEAIRISPTFADAYSNMGNTLKEMQDVQGALQCYTRAIQINPAFADAHSNLASIHKDSGNIPEAIASYRTALKLKPDFPDAYCNLAHCLQIVCDWTDYDERMKKLVSIVADQLEKNRLPSVHPHHSMLYPLSHGFRKAIAERHGNLCLDKINVLHKPPYEHPKDLKLSDGRLRVGYVSSDFGNHPTSHLMQSIPGMHNPDKFEVFCYALSPDDGTNFRVKVMAEANHFIDLSQIPCNGKAADRIHQDGIHILVNMNGYTKGARNELFALRPAPIQAMWLGYPGTSGALFMDYIITDQETSPAEVAEQYSEKLAYMPHTFFIGDHANMFPHLKKKAVIDFKSNGHIYDNRIVLNGIDLKAFLDSLPDVKIVKMKCPDGGDNADSSNTALNMPVIPMNTIAEAVIEMINRGQIQITINGFSISNGLATTQINNKAATGEEVPRTIIVTTRSQYGLPEDAIVYCNFNQLYKIDPSTLQMWANILKRVPNSVLWLLRFPAVGEPNIQQYAQNMGLPQNRIIFSPVAPKEEHVRRGQLADVCLDTPLCNGHTTGMDVLWAGTPMVTMPGETLASRVAASQLTCLGCLELIAKNRQEYEDIAVKLGTDLEYLKKVRGKVWKQRISSPLFNTKQYTMELERLYLQMWEHYAAGNKPDHMIKPVEVTESA</sequence>
<accession>O15294</accession>
<accession>Q7Z3K0</accession>
<accession>Q8WWM8</accession>
<accession>Q96CC1</accession>
<accession>Q9UG57</accession>